<feature type="chain" id="PRO_0000057849" description="Gap junction beta-1 protein">
    <location>
        <begin position="1"/>
        <end position="283"/>
    </location>
</feature>
<feature type="topological domain" description="Cytoplasmic" evidence="67">
    <location>
        <begin position="1"/>
        <end position="22"/>
    </location>
</feature>
<feature type="transmembrane region" description="Helical" evidence="66">
    <location>
        <begin position="23"/>
        <end position="45"/>
    </location>
</feature>
<feature type="topological domain" description="Extracellular" evidence="67">
    <location>
        <begin position="46"/>
        <end position="75"/>
    </location>
</feature>
<feature type="transmembrane region" description="Helical" evidence="66">
    <location>
        <begin position="76"/>
        <end position="95"/>
    </location>
</feature>
<feature type="topological domain" description="Cytoplasmic" evidence="67">
    <location>
        <begin position="96"/>
        <end position="130"/>
    </location>
</feature>
<feature type="transmembrane region" description="Helical" evidence="66">
    <location>
        <begin position="131"/>
        <end position="153"/>
    </location>
</feature>
<feature type="topological domain" description="Extracellular" evidence="67">
    <location>
        <begin position="154"/>
        <end position="191"/>
    </location>
</feature>
<feature type="transmembrane region" description="Helical" evidence="66">
    <location>
        <begin position="192"/>
        <end position="214"/>
    </location>
</feature>
<feature type="topological domain" description="Cytoplasmic" evidence="67">
    <location>
        <begin position="215"/>
        <end position="283"/>
    </location>
</feature>
<feature type="modified residue" description="Phosphoserine" evidence="2">
    <location>
        <position position="233"/>
    </location>
</feature>
<feature type="modified residue" description="Phosphoserine" evidence="68">
    <location>
        <position position="258"/>
    </location>
</feature>
<feature type="modified residue" description="Phosphoserine" evidence="68">
    <location>
        <position position="266"/>
    </location>
</feature>
<feature type="modified residue" description="Phosphoserine" evidence="68">
    <location>
        <position position="277"/>
    </location>
</feature>
<feature type="sequence variant" id="VAR_002006" description="In CMTX1." evidence="56">
    <original>W</original>
    <variation>R</variation>
    <location>
        <position position="3"/>
    </location>
</feature>
<feature type="sequence variant" id="VAR_002007" description="In CMTX1; dbSNP:rs1555936989." evidence="9 46 50 56">
    <original>W</original>
    <variation>S</variation>
    <location>
        <position position="3"/>
    </location>
</feature>
<feature type="sequence variant" id="VAR_029894" description="In CMTX1." evidence="29">
    <original>YT</original>
    <variation>S</variation>
    <location>
        <begin position="7"/>
        <end position="8"/>
    </location>
</feature>
<feature type="sequence variant" id="VAR_002008" description="In CMTX1." evidence="17 47 56">
    <original>Y</original>
    <variation>C</variation>
    <location>
        <position position="7"/>
    </location>
</feature>
<feature type="sequence variant" id="VAR_029895" description="In CMTX1." evidence="12">
    <original>T</original>
    <variation>I</variation>
    <location>
        <position position="8"/>
    </location>
</feature>
<feature type="sequence variant" id="VAR_002009" description="In CMTX1." evidence="17">
    <original>T</original>
    <variation>P</variation>
    <location>
        <position position="8"/>
    </location>
</feature>
<feature type="sequence variant" id="VAR_029896" description="In CMTX1." evidence="62">
    <original>L</original>
    <variation>W</variation>
    <location>
        <position position="9"/>
    </location>
</feature>
<feature type="sequence variant" id="VAR_002010" description="In CMTX1." evidence="64">
    <original>S</original>
    <variation>G</variation>
    <location>
        <position position="11"/>
    </location>
</feature>
<feature type="sequence variant" id="VAR_002011" description="In CMTX1; dbSNP:rs1555936999." evidence="42 56">
    <original>G</original>
    <variation>S</variation>
    <location>
        <position position="12"/>
    </location>
</feature>
<feature type="sequence variant" id="VAR_002012" description="In CMTX1; dbSNP:rs104894820." evidence="38 56">
    <original>V</original>
    <variation>L</variation>
    <location>
        <position position="13"/>
    </location>
</feature>
<feature type="sequence variant" id="VAR_002013" description="In CMTX1; dbSNP:rs104894820." evidence="56">
    <original>V</original>
    <variation>M</variation>
    <location>
        <position position="13"/>
    </location>
</feature>
<feature type="sequence variant" id="VAR_002014" description="In CMTX1." evidence="56">
    <original>N</original>
    <variation>K</variation>
    <location>
        <position position="14"/>
    </location>
</feature>
<feature type="sequence variant" id="VAR_002015" description="In CMTX1; dbSNP:rs863224974." evidence="41 56">
    <original>R</original>
    <variation>Q</variation>
    <location>
        <position position="15"/>
    </location>
</feature>
<feature type="sequence variant" id="VAR_002016" description="In CMTX1; moderate; dbSNP:rs116840815." evidence="21 53 56 59">
    <original>R</original>
    <variation>W</variation>
    <location>
        <position position="15"/>
    </location>
</feature>
<feature type="sequence variant" id="VAR_002017" description="In CMTX1." evidence="56">
    <original>H</original>
    <variation>P</variation>
    <location>
        <position position="16"/>
    </location>
</feature>
<feature type="sequence variant" id="VAR_029897" description="In CMTX1." evidence="8">
    <original>IG</original>
    <variation>NS</variation>
    <location>
        <begin position="20"/>
        <end position="21"/>
    </location>
</feature>
<feature type="sequence variant" id="VAR_002018" description="In CMTX1." evidence="56">
    <original>I</original>
    <variation>S</variation>
    <location>
        <position position="20"/>
    </location>
</feature>
<feature type="sequence variant" id="VAR_002019" description="In CMTX1." evidence="56">
    <original>G</original>
    <variation>D</variation>
    <location>
        <position position="21"/>
    </location>
</feature>
<feature type="sequence variant" id="VAR_002020" description="In CMTX1; non-functional channel." evidence="7 19 44 56">
    <original>R</original>
    <variation>G</variation>
    <location>
        <position position="22"/>
    </location>
</feature>
<feature type="sequence variant" id="VAR_002021" description="In CMTX1." evidence="7 44 56">
    <original>R</original>
    <variation>P</variation>
    <location>
        <position position="22"/>
    </location>
</feature>
<feature type="sequence variant" id="VAR_002022" description="In CMTX1; dbSNP:rs1060501002." evidence="6 9 17 21 46 55 56 61 62">
    <original>R</original>
    <variation>Q</variation>
    <location>
        <position position="22"/>
    </location>
</feature>
<feature type="sequence variant" id="VAR_002023" description="In CMTX1." evidence="54 56">
    <original>V</original>
    <variation>A</variation>
    <location>
        <position position="23"/>
    </location>
</feature>
<feature type="sequence variant" id="VAR_029898" description="In CMTX1." evidence="23">
    <original>W</original>
    <variation>C</variation>
    <location>
        <position position="24"/>
    </location>
</feature>
<feature type="sequence variant" id="VAR_002024" description="In CMTX1." evidence="51 56">
    <original>L</original>
    <variation>F</variation>
    <location>
        <position position="25"/>
    </location>
</feature>
<feature type="sequence variant" id="VAR_029899" description="In CMTX1." evidence="17">
    <original>L</original>
    <variation>P</variation>
    <location>
        <position position="25"/>
    </location>
</feature>
<feature type="sequence variant" id="VAR_002025" description="In CMTX1; dbSNP:rs587777876." evidence="28 49 51 56">
    <original>S</original>
    <variation>L</variation>
    <location>
        <position position="26"/>
    </location>
</feature>
<feature type="sequence variant" id="VAR_029900" description="In CMTX1; severe." evidence="16">
    <original>S</original>
    <variation>W</variation>
    <location>
        <position position="26"/>
    </location>
</feature>
<feature type="sequence variant" id="VAR_002027" description="In CMTX1.">
    <original>I</original>
    <variation>IIF</variation>
    <location>
        <position position="28"/>
    </location>
</feature>
<feature type="sequence variant" id="VAR_029901" description="In CMTX1; dbSNP:rs768834663." evidence="56">
    <original>I</original>
    <variation>N</variation>
    <location>
        <position position="28"/>
    </location>
</feature>
<feature type="sequence variant" id="VAR_002026" description="In CMTX1; dbSNP:rs768834663." evidence="56 62">
    <original>I</original>
    <variation>T</variation>
    <location>
        <position position="28"/>
    </location>
</feature>
<feature type="sequence variant" id="VAR_002028" description="In CMTX1." evidence="56">
    <original>F</original>
    <variation>L</variation>
    <location>
        <position position="29"/>
    </location>
</feature>
<feature type="sequence variant" id="VAR_002029" description="In CMTX1; dbSNP:rs104894817." evidence="17 38 56">
    <original>I</original>
    <variation>N</variation>
    <location>
        <position position="30"/>
    </location>
</feature>
<feature type="sequence variant" id="VAR_029902" description="In CMTX1." evidence="62">
    <original>I</original>
    <variation>T</variation>
    <location>
        <position position="30"/>
    </location>
</feature>
<feature type="sequence variant" id="VAR_029903" description="In CMTX1; localized in the Golgi apparatus but also forming rare small junction-like plaques; dbSNP:rs1060501000." evidence="27">
    <original>M</original>
    <variation>I</variation>
    <location>
        <position position="34"/>
    </location>
</feature>
<feature type="sequence variant" id="VAR_029904" description="In CMTX1; localized to the endoplasmic reticulum." evidence="8 27">
    <original>M</original>
    <variation>K</variation>
    <location>
        <position position="34"/>
    </location>
</feature>
<feature type="sequence variant" id="VAR_002030" description="In CMTX1; functional channel; localized in the Golgi apparatus without reaching the cell membrane; dbSNP:rs1060500998." evidence="19 27 48 56 57 62">
    <original>M</original>
    <variation>T</variation>
    <location>
        <position position="34"/>
    </location>
</feature>
<feature type="sequence variant" id="VAR_002031" description="In CMTX1; localized in the Golgi apparatus but also forming rare small gap junction-like plaques." evidence="7 19 27 52 56">
    <original>M</original>
    <variation>V</variation>
    <location>
        <position position="34"/>
    </location>
</feature>
<feature type="sequence variant" id="VAR_002032" description="In CMTX1; localized mainly on the cell membrane forming gap junction-like plaques." evidence="27 56 62 65">
    <original>V</original>
    <variation>M</variation>
    <location>
        <position position="35"/>
    </location>
</feature>
<feature type="sequence variant" id="VAR_029905" description="In CMTX1; localized in the Golgi apparatus but also forming rare small gap junction-like plaques." evidence="27 63">
    <original>V</original>
    <variation>M</variation>
    <location>
        <position position="37"/>
    </location>
</feature>
<feature type="sequence variant" id="VAR_002033" description="In CMTX1; localized in the Golgi apparatus without reaching the cell membrane; dbSNP:rs879254012." evidence="27 39 56">
    <original>V</original>
    <variation>M</variation>
    <location>
        <position position="38"/>
    </location>
</feature>
<feature type="sequence variant" id="VAR_002034" description="In CMTX1." evidence="64">
    <original>A</original>
    <variation>P</variation>
    <location>
        <position position="39"/>
    </location>
</feature>
<feature type="sequence variant" id="VAR_002035" description="In CMTX1; dbSNP:rs786204095." evidence="6">
    <original>A</original>
    <variation>V</variation>
    <location>
        <position position="39"/>
    </location>
</feature>
<feature type="sequence variant" id="VAR_029906" description="In CMTX1." evidence="30">
    <original>A</original>
    <variation>T</variation>
    <location>
        <position position="40"/>
    </location>
</feature>
<feature type="sequence variant" id="VAR_002036" description="In CMTX1; localized in the Golgi apparatus without reaching the cell membrane." evidence="27 56">
    <original>A</original>
    <variation>V</variation>
    <location>
        <position position="40"/>
    </location>
</feature>
<feature type="sequence variant" id="VAR_002037" description="In CMTX1." evidence="56">
    <original>E</original>
    <variation>K</variation>
    <location>
        <position position="41"/>
    </location>
</feature>
<feature type="sequence variant" id="VAR_002038" description="In CMTX1." evidence="6">
    <original>V</original>
    <variation>M</variation>
    <location>
        <position position="43"/>
    </location>
</feature>
<feature type="sequence variant" id="VAR_002039" description="In CMTX1." evidence="56">
    <original>W</original>
    <variation>L</variation>
    <location>
        <position position="44"/>
    </location>
</feature>
<feature type="sequence variant" id="VAR_029907" description="In CMTX1; dbSNP:rs116840817." evidence="24">
    <original>S</original>
    <variation>P</variation>
    <location>
        <position position="49"/>
    </location>
</feature>
<feature type="sequence variant" id="VAR_002040" description="In CMTX1." evidence="43 56">
    <original>S</original>
    <variation>Y</variation>
    <location>
        <position position="49"/>
    </location>
</feature>
<feature type="sequence variant" id="VAR_002041" description="In CMTX1; dbSNP:rs913934445." evidence="7">
    <original>S</original>
    <variation>P</variation>
    <location>
        <position position="50"/>
    </location>
</feature>
<feature type="sequence variant" id="VAR_002042" description="In CMTX1; suggests a failure to incorporate the mutant protein in the cell membrane." evidence="49 56 60">
    <original>C</original>
    <variation>S</variation>
    <location>
        <position position="53"/>
    </location>
</feature>
<feature type="sequence variant" id="VAR_029908" description="In CMTX1; dbSNP:rs863224613." evidence="28">
    <original>T</original>
    <variation>A</variation>
    <location>
        <position position="55"/>
    </location>
</feature>
<feature type="sequence variant" id="VAR_008137" description="In CMTX1; dbSNP:rs104894824." evidence="4 20">
    <original>T</original>
    <variation>I</variation>
    <location>
        <position position="55"/>
    </location>
</feature>
<feature type="sequence variant" id="VAR_029909" description="In CMTX1." evidence="23">
    <original>T</original>
    <variation>R</variation>
    <location>
        <position position="55"/>
    </location>
</feature>
<feature type="sequence variant" id="VAR_002043" description="In CMTX1; functional channel." evidence="7 19 56">
    <original>L</original>
    <variation>F</variation>
    <location>
        <position position="56"/>
    </location>
</feature>
<feature type="sequence variant" id="VAR_029910" description="In CMTX1." evidence="28 63">
    <original>Q</original>
    <variation>H</variation>
    <location>
        <position position="57"/>
    </location>
</feature>
<feature type="sequence variant" id="VAR_002044" description="In CMTX1." evidence="61">
    <original>P</original>
    <variation>R</variation>
    <location>
        <position position="58"/>
    </location>
</feature>
<feature type="sequence variant" id="VAR_002045" description="In CMTX1." evidence="17">
    <original>G</original>
    <variation>C</variation>
    <location>
        <position position="59"/>
    </location>
</feature>
<feature type="sequence variant" id="VAR_029911" description="In CMTX1; dbSNP:rs1555937077." evidence="10">
    <original>G</original>
    <variation>R</variation>
    <location>
        <position position="59"/>
    </location>
</feature>
<feature type="sequence variant" id="VAR_002046" description="In CMTX1; moderate." evidence="6 41 56 59">
    <original>C</original>
    <variation>F</variation>
    <location>
        <position position="60"/>
    </location>
</feature>
<feature type="sequence variant" id="VAR_002047" description="In CMTX1; dbSNP:rs116840818." evidence="28 41 53 56 61">
    <original>V</original>
    <variation>I</variation>
    <location>
        <position position="63"/>
    </location>
</feature>
<feature type="sequence variant" id="VAR_029912" description="In CMTX1; moderate." evidence="16">
    <original>C</original>
    <variation>F</variation>
    <location>
        <position position="64"/>
    </location>
</feature>
<feature type="sequence variant" id="VAR_002048" description="In CMTX1." evidence="54 56">
    <original>C</original>
    <variation>S</variation>
    <location>
        <position position="64"/>
    </location>
</feature>
<feature type="sequence variant" id="VAR_002049" description="In CMTX1; dbSNP:rs104894819." evidence="38 53 56">
    <original>Y</original>
    <variation>C</variation>
    <location>
        <position position="65"/>
    </location>
</feature>
<feature type="sequence variant" id="VAR_012313" description="In CMTX1." evidence="18">
    <original>Y</original>
    <variation>H</variation>
    <location>
        <position position="65"/>
    </location>
</feature>
<feature type="sequence variant" id="VAR_002050" description="In CMTX1.">
    <location>
        <position position="66"/>
    </location>
</feature>
<feature type="sequence variant" id="VAR_029913" description="In CMTX1." evidence="11 28">
    <original>F</original>
    <variation>L</variation>
    <location>
        <position position="69"/>
    </location>
</feature>
<feature type="sequence variant" id="VAR_029914" description="In CMTX1; dbSNP:rs878853697." evidence="9">
    <original>P</original>
    <variation>A</variation>
    <location>
        <position position="70"/>
    </location>
</feature>
<feature type="sequence variant" id="VAR_002051" description="In CMTX1; localized in the Golgi apparatus without reaching the cell membrane." evidence="27 56">
    <original>R</original>
    <variation>P</variation>
    <location>
        <position position="75"/>
    </location>
</feature>
<feature type="sequence variant" id="VAR_002052" description="In CMTX1; localized in the Golgi apparatus without reaching the cell membrane; dbSNP:rs863224972." evidence="26 27 48 55 56">
    <original>R</original>
    <variation>Q</variation>
    <location>
        <position position="75"/>
    </location>
</feature>
<feature type="sequence variant" id="VAR_002053" description="In CMTX1; localized in the Golgi apparatus without reaching the cell membrane; dbSNP:rs116840819." evidence="7 26 27 55 56">
    <original>R</original>
    <variation>W</variation>
    <location>
        <position position="75"/>
    </location>
</feature>
<feature type="sequence variant" id="VAR_002054" description="In CMTX1; dbSNP:rs199570177." evidence="9 46 56">
    <original>W</original>
    <variation>S</variation>
    <location>
        <position position="77"/>
    </location>
</feature>
<feature type="sequence variant" id="VAR_002055" description="In CMTX1; dbSNP:rs879254097." evidence="8 9 46 56">
    <original>Q</original>
    <variation>R</variation>
    <location>
        <position position="80"/>
    </location>
</feature>
<feature type="sequence variant" id="VAR_002056" description="In CMTX1." evidence="64">
    <original>L</original>
    <variation>F</variation>
    <location>
        <position position="81"/>
    </location>
</feature>
<feature type="sequence variant" id="VAR_002057" description="In CMTX1." evidence="64">
    <original>L</original>
    <variation>P</variation>
    <location>
        <position position="83"/>
    </location>
</feature>
<feature type="sequence variant" id="VAR_002058" description="In CMTX1." evidence="19 57">
    <original>V</original>
    <variation>I</variation>
    <location>
        <position position="84"/>
    </location>
</feature>
<feature type="sequence variant" id="VAR_002059" description="In CMTX1; mutant have a higher open probability than hemichannels formed of GJB1 wild-type; dbSNP:rs104894823." evidence="22 56">
    <original>S</original>
    <variation>C</variation>
    <location>
        <position position="85"/>
    </location>
</feature>
<feature type="sequence variant" id="VAR_002060" description="In CMTX1." evidence="56">
    <original>S</original>
    <variation>F</variation>
    <location>
        <position position="85"/>
    </location>
</feature>
<feature type="sequence variant" id="VAR_002061" description="In CMTX1; moderate." evidence="56 59">
    <original>T</original>
    <variation>A</variation>
    <location>
        <position position="86"/>
    </location>
</feature>
<feature type="sequence variant" id="VAR_002062" description="In CMTX1." evidence="56">
    <original>T</original>
    <variation>N</variation>
    <location>
        <position position="86"/>
    </location>
</feature>
<feature type="sequence variant" id="VAR_002063" description="In CMTX1." evidence="56">
    <original>T</original>
    <variation>S</variation>
    <location>
        <position position="86"/>
    </location>
</feature>
<feature type="sequence variant" id="VAR_002064" description="In CMTX1; dbSNP:rs587777877." evidence="51 56">
    <original>P</original>
    <variation>A</variation>
    <location>
        <position position="87"/>
    </location>
</feature>
<feature type="sequence variant" id="VAR_002065" description="In CMTX1." evidence="56">
    <original>P</original>
    <variation>L</variation>
    <location>
        <position position="87"/>
    </location>
</feature>
<feature type="sequence variant" id="VAR_002066" description="In CMTX1." evidence="53 54 56">
    <original>P</original>
    <variation>S</variation>
    <location>
        <position position="87"/>
    </location>
</feature>
<feature type="sequence variant" id="VAR_002067" description="In CMTX1; dbSNP:rs1555937122." evidence="53 56">
    <original>L</original>
    <variation>P</variation>
    <location>
        <position position="89"/>
    </location>
</feature>
<feature type="sequence variant" id="VAR_002068" description="In CMTX1." evidence="7 52 56">
    <original>L</original>
    <variation>H</variation>
    <location>
        <position position="90"/>
    </location>
</feature>
<feature type="sequence variant" id="VAR_029915" description="In CMTX1." evidence="8">
    <original>L</original>
    <variation>V</variation>
    <location>
        <position position="90"/>
    </location>
</feature>
<feature type="sequence variant" id="VAR_029916" description="In CMTX1; dbSNP:rs756928158." evidence="14 19">
    <original>V</original>
    <variation>M</variation>
    <location>
        <position position="91"/>
    </location>
</feature>
<feature type="sequence variant" id="VAR_002069" description="In CMTX1." evidence="8 56">
    <original>M</original>
    <variation>V</variation>
    <location>
        <position position="93"/>
    </location>
</feature>
<feature type="sequence variant" id="VAR_029917" description="In CMTX1." evidence="19">
    <original>H</original>
    <variation>D</variation>
    <location>
        <position position="94"/>
    </location>
</feature>
<feature type="sequence variant" id="VAR_002070" description="In CMTX1; non-functional channel; dbSNP:rs756000896." evidence="19 56">
    <original>H</original>
    <variation>Q</variation>
    <location>
        <position position="94"/>
    </location>
</feature>
<feature type="sequence variant" id="VAR_002071" description="In CMTX1." evidence="56">
    <original>H</original>
    <variation>Y</variation>
    <location>
        <position position="94"/>
    </location>
</feature>
<feature type="sequence variant" id="VAR_002072" description="In CMTX1; non-functional channel; dbSNP:rs104894821." evidence="9 19 38 56 57">
    <original>V</original>
    <variation>M</variation>
    <location>
        <position position="95"/>
    </location>
</feature>
<feature type="sequence variant" id="VAR_002073" description="In CMTX1; mild/moderate." evidence="56 59">
    <original>H</original>
    <variation>Y</variation>
    <location>
        <position position="100"/>
    </location>
</feature>
<feature type="sequence variant" id="VAR_002074" description="In CMTX1; mild phenotype; increased sensitivity to acidification-induced closure; dbSNP:rs779696968." evidence="9 21 32 40 46 56">
    <original>E</original>
    <variation>G</variation>
    <location>
        <position position="102"/>
    </location>
</feature>
<feature type="sequence variant" id="VAR_029918" description="In CMTX1." evidence="31">
    <location>
        <position position="102"/>
    </location>
</feature>
<feature type="sequence variant" id="VAR_002075" description="In CMTX1; dbSNP:rs1131691322." evidence="56">
    <original>K</original>
    <variation>E</variation>
    <location>
        <position position="103"/>
    </location>
</feature>
<feature type="sequence variant" id="VAR_029919" description="In CMTX1." evidence="6">
    <original>K</original>
    <variation>T</variation>
    <location>
        <position position="104"/>
    </location>
</feature>
<feature type="sequence variant" id="VAR_002076" description="In CMTX1; dbSNP:rs863224973." evidence="7 8 19 48 52 55 56 57 62">
    <original>R</original>
    <variation>W</variation>
    <location>
        <position position="107"/>
    </location>
</feature>
<feature type="sequence variant" id="VAR_029920" description="In CMTX1." evidence="21">
    <original>L</original>
    <variation>P</variation>
    <location>
        <position position="108"/>
    </location>
</feature>
<feature type="sequence variant" id="VAR_002077" description="In CMTX1." evidence="65">
    <location>
        <begin position="111"/>
        <end position="116"/>
    </location>
</feature>
<feature type="sequence variant" id="VAR_008138" description="In CMTX1." evidence="4">
    <original>V</original>
    <variation>E</variation>
    <location>
        <position position="120"/>
    </location>
</feature>
<feature type="sequence variant" id="VAR_029921" description="In CMTX1." evidence="26">
    <location>
        <position position="120"/>
    </location>
</feature>
<feature type="sequence variant" id="VAR_076567" description="In CMTX1; dbSNP:rs1555937161." evidence="37">
    <original>K</original>
    <variation>E</variation>
    <location>
        <position position="124"/>
    </location>
</feature>
<feature type="sequence variant" id="VAR_002078" description="In CMTX1; dbSNP:rs876661119." evidence="56">
    <original>K</original>
    <variation>N</variation>
    <location>
        <position position="124"/>
    </location>
</feature>
<feature type="sequence variant" id="VAR_029922" description="In CMTX1." evidence="23">
    <original>V</original>
    <variation>D</variation>
    <location>
        <position position="125"/>
    </location>
</feature>
<feature type="sequence variant" id="VAR_029923" description="In CMTX1; dbSNP:rs879253995." evidence="13">
    <original>H</original>
    <variation>Y</variation>
    <location>
        <position position="126"/>
    </location>
</feature>
<feature type="sequence variant" id="VAR_029924" description="In CMTX1." evidence="62">
    <original>I</original>
    <variation>M</variation>
    <location>
        <position position="127"/>
    </location>
</feature>
<feature type="sequence variant" id="VAR_029925" description="In CMTX1." evidence="34">
    <original>I</original>
    <variation>S</variation>
    <location>
        <position position="127"/>
    </location>
</feature>
<feature type="sequence variant" id="VAR_002079" description="In CMTX1." evidence="56">
    <original>S</original>
    <variation>P</variation>
    <location>
        <position position="128"/>
    </location>
</feature>
<feature type="sequence variant" id="VAR_029926" description="In CMTX1." evidence="19">
    <original>T</original>
    <variation>I</variation>
    <location>
        <position position="130"/>
    </location>
</feature>
<feature type="sequence variant" id="VAR_029927" description="In CMTX1." evidence="62">
    <original>L</original>
    <variation>P</variation>
    <location>
        <position position="131"/>
    </location>
</feature>
<feature type="sequence variant" id="VAR_002080" description="In CMTX1; moderate." evidence="59">
    <original>W</original>
    <variation>C</variation>
    <location>
        <position position="133"/>
    </location>
</feature>
<feature type="sequence variant" id="VAR_002081" description="In CMTX1; dbSNP:rs104894813." evidence="7 19 38 56 57">
    <original>W</original>
    <variation>R</variation>
    <location>
        <position position="133"/>
    </location>
</feature>
<feature type="sequence variant" id="VAR_002082" description="In CMTX1." evidence="64">
    <original>Y</original>
    <variation>C</variation>
    <location>
        <position position="135"/>
    </location>
</feature>
<feature type="sequence variant" id="VAR_021611" description="In CMTX1 and DSS; found in a DSS patient with severe symptoms also carrying W-359 in the EGR2 gene; may act as a modifier of disease severity; dbSNP:rs104894826." evidence="33 36">
    <original>V</original>
    <variation>A</variation>
    <location>
        <position position="136"/>
    </location>
</feature>
<feature type="sequence variant" id="VAR_029928" description="In CMTX1." evidence="29">
    <original>S</original>
    <variation>N</variation>
    <location>
        <position position="138"/>
    </location>
</feature>
<feature type="sequence variant" id="VAR_002083" description="In CMTX1; dbSNP:rs104894812." evidence="6 17 26 28 42 53 55 56">
    <original>V</original>
    <variation>M</variation>
    <location>
        <position position="139"/>
    </location>
</feature>
<feature type="sequence variant" id="VAR_002084" description="In CMTX1; dbSNP:rs1555937180." evidence="19 57">
    <original>F</original>
    <variation>L</variation>
    <location>
        <position position="141"/>
    </location>
</feature>
<feature type="sequence variant" id="VAR_002085" description="In CMTX1; requires 2 nucleotide substitutions." evidence="56">
    <original>R</original>
    <variation>E</variation>
    <location>
        <position position="142"/>
    </location>
</feature>
<feature type="sequence variant" id="VAR_029929" description="In CMTX1; dbSNP:rs786204123." evidence="6 11 19 28">
    <original>R</original>
    <variation>Q</variation>
    <location>
        <position position="142"/>
    </location>
</feature>
<feature type="sequence variant" id="VAR_002086" description="In CMTX1; moderate; dbSNP:rs104894810." evidence="6 7 8 9 16 25 28 40 42 46 52 56">
    <original>R</original>
    <variation>W</variation>
    <location>
        <position position="142"/>
    </location>
</feature>
<feature type="sequence variant" id="VAR_002087" description="In CMTX1." evidence="17 41 56">
    <location>
        <position position="143"/>
    </location>
</feature>
<feature type="sequence variant" id="VAR_029930" description="In CMTX1." evidence="26">
    <original>E</original>
    <variation>K</variation>
    <location>
        <position position="146"/>
    </location>
</feature>
<feature type="sequence variant" id="VAR_029931" description="In CMTX1." evidence="26">
    <original>A</original>
    <variation>D</variation>
    <location>
        <position position="147"/>
    </location>
</feature>
<feature type="sequence variant" id="VAR_002088" description="In CMTX1." evidence="64">
    <original>F</original>
    <variation>I</variation>
    <location>
        <position position="149"/>
    </location>
</feature>
<feature type="sequence variant" id="VAR_029932" description="In CMTX1; uncertain significance." evidence="6">
    <original>F</original>
    <variation>V</variation>
    <location>
        <position position="149"/>
    </location>
</feature>
<feature type="sequence variant" id="VAR_029933" description="In CMTX1." evidence="17">
    <original>Y</original>
    <variation>S</variation>
    <location>
        <position position="151"/>
    </location>
</feature>
<feature type="sequence variant" id="VAR_029934" description="In CMTX1." evidence="23">
    <original>F</original>
    <variation>S</variation>
    <location>
        <position position="153"/>
    </location>
</feature>
<feature type="sequence variant" id="VAR_002089" description="In CMTX1." evidence="7 52 56">
    <original>L</original>
    <variation>F</variation>
    <location>
        <position position="156"/>
    </location>
</feature>
<feature type="sequence variant" id="VAR_002090" description="In CMTX1; dbSNP:rs104894818." evidence="38 42 56">
    <original>L</original>
    <variation>R</variation>
    <location>
        <position position="156"/>
    </location>
</feature>
<feature type="sequence variant" id="VAR_002091" description="In CMTX1." evidence="56">
    <original>Y</original>
    <variation>C</variation>
    <location>
        <position position="157"/>
    </location>
</feature>
<feature type="sequence variant" id="VAR_002092" description="In CMTX1." evidence="19 56 57 62 65">
    <original>P</original>
    <variation>A</variation>
    <location>
        <position position="158"/>
    </location>
</feature>
<feature type="sequence variant" id="VAR_002093" description="In CMTX1." evidence="56">
    <original>P</original>
    <variation>R</variation>
    <location>
        <position position="158"/>
    </location>
</feature>
<feature type="sequence variant" id="VAR_002094" description="In CMTX1." evidence="64">
    <original>P</original>
    <variation>S</variation>
    <location>
        <position position="158"/>
    </location>
</feature>
<feature type="sequence variant" id="VAR_029935" description="In CMTX1." evidence="19">
    <original>G</original>
    <variation>D</variation>
    <location>
        <position position="159"/>
    </location>
</feature>
<feature type="sequence variant" id="VAR_002095" description="In CMTX1; dbSNP:rs1555937194." evidence="7">
    <original>G</original>
    <variation>S</variation>
    <location>
        <position position="159"/>
    </location>
</feature>
<feature type="sequence variant" id="VAR_002096" description="In CMTX1; dbSNP:rs1555937197." evidence="56">
    <original>Y</original>
    <variation>H</variation>
    <location>
        <position position="160"/>
    </location>
</feature>
<feature type="sequence variant" id="VAR_002097" description="In CMTX1." evidence="56">
    <original>A</original>
    <variation>P</variation>
    <location>
        <position position="161"/>
    </location>
</feature>
<feature type="sequence variant" id="VAR_002098" description="In CMTX1; dbSNP:rs1241595912." evidence="4 8 11 19 29 33 54 56">
    <original>R</original>
    <variation>Q</variation>
    <location>
        <position position="164"/>
    </location>
</feature>
<feature type="sequence variant" id="VAR_002099" description="In CMTX1; moderate; dbSNP:rs139643362." evidence="9 16 17 19 45 46 54 56">
    <original>R</original>
    <variation>W</variation>
    <location>
        <position position="164"/>
    </location>
</feature>
<feature type="sequence variant" id="VAR_021612" description="In CMTX1; demyelinating form." evidence="33">
    <original>C</original>
    <variation>R</variation>
    <location>
        <position position="168"/>
    </location>
</feature>
<feature type="sequence variant" id="VAR_029936" description="In CMTX1." evidence="25">
    <original>C</original>
    <variation>Y</variation>
    <location>
        <position position="168"/>
    </location>
</feature>
<feature type="sequence variant" id="VAR_029937" description="In CMTX1." evidence="29">
    <original>P</original>
    <variation>A</variation>
    <location>
        <position position="172"/>
    </location>
</feature>
<feature type="sequence variant" id="VAR_002100" description="In CMTX1; dbSNP:rs1555937218." evidence="56 61 63">
    <original>P</original>
    <variation>L</variation>
    <location>
        <position position="172"/>
    </location>
</feature>
<feature type="sequence variant" id="VAR_029938" description="In CMTX1; suggests a failure to incorporate the mutant protein in the cell membrane." evidence="28 60">
    <original>P</original>
    <variation>R</variation>
    <location>
        <position position="172"/>
    </location>
</feature>
<feature type="sequence variant" id="VAR_002101" description="In CMTX1; dbSNP:rs104894811." evidence="42 56">
    <original>P</original>
    <variation>S</variation>
    <location>
        <position position="172"/>
    </location>
</feature>
<feature type="sequence variant" id="VAR_002102" description="In CMTX1." evidence="64">
    <original>C</original>
    <variation>R</variation>
    <location>
        <position position="173"/>
    </location>
</feature>
<feature type="sequence variant" id="VAR_002103" description="In CMTX1." evidence="61">
    <original>N</original>
    <variation>D</variation>
    <location>
        <position position="175"/>
    </location>
</feature>
<feature type="sequence variant" id="VAR_029939" description="In CMTX1." evidence="28 63">
    <original>V</original>
    <variation>A</variation>
    <location>
        <position position="177"/>
    </location>
</feature>
<feature type="sequence variant" id="VAR_029940" description="In CMTX1." evidence="6">
    <original>V</original>
    <variation>E</variation>
    <location>
        <position position="177"/>
    </location>
</feature>
<feature type="sequence variant" id="VAR_002104" description="In CMTX1." evidence="56">
    <original>D</original>
    <variation>Y</variation>
    <location>
        <position position="178"/>
    </location>
</feature>
<feature type="sequence variant" id="VAR_002105" description="In CMTX1." evidence="56">
    <original>C</original>
    <variation>R</variation>
    <location>
        <position position="179"/>
    </location>
</feature>
<feature type="sequence variant" id="VAR_002106" description="In CMTX1." evidence="56">
    <original>F</original>
    <variation>L</variation>
    <location>
        <position position="180"/>
    </location>
</feature>
<feature type="sequence variant" id="VAR_029941" description="In CMTX1." evidence="9">
    <original>F</original>
    <variation>S</variation>
    <location>
        <position position="180"/>
    </location>
</feature>
<feature type="sequence variant" id="VAR_029942" description="In CMTX1; profoundly impaired in their ability to support the earliest stages of regeneration of myelinated fibers." evidence="32">
    <original>V</original>
    <variation>A</variation>
    <location>
        <position position="181"/>
    </location>
</feature>
<feature type="sequence variant" id="VAR_002107" description="In CMTX1; dbSNP:rs879253909." evidence="56">
    <original>V</original>
    <variation>M</variation>
    <location>
        <position position="181"/>
    </location>
</feature>
<feature type="sequence variant" id="VAR_002108" description="In CMTX1." evidence="56 62 65">
    <original>S</original>
    <variation>T</variation>
    <location>
        <position position="182"/>
    </location>
</feature>
<feature type="sequence variant" id="VAR_002109" description="In CMTX1; dbSNP:rs863224471." evidence="54 56">
    <original>R</original>
    <variation>C</variation>
    <location>
        <position position="183"/>
    </location>
</feature>
<feature type="sequence variant" id="VAR_002110" description="In CMTX1; dbSNP:rs1555937233." evidence="8 28 54 56">
    <original>R</original>
    <variation>H</variation>
    <location>
        <position position="183"/>
    </location>
</feature>
<feature type="sequence variant" id="VAR_002111" description="In CMTX1." evidence="54 56">
    <original>R</original>
    <variation>S</variation>
    <location>
        <position position="183"/>
    </location>
</feature>
<feature type="sequence variant" id="VAR_029943" description="In CMTX1." evidence="17">
    <original>P</original>
    <variation>L</variation>
    <location>
        <position position="184"/>
    </location>
</feature>
<feature type="sequence variant" id="VAR_002112" description="In CMTX1." evidence="7">
    <original>P</original>
    <variation>R</variation>
    <location>
        <position position="184"/>
    </location>
</feature>
<feature type="sequence variant" id="VAR_002113" description="In CMTX1." evidence="56">
    <location>
        <position position="185"/>
    </location>
</feature>
<feature type="sequence variant" id="VAR_002114" description="In CMTX1; non-functional channel; dbSNP:rs116840821." evidence="7 8 19 42 52 56">
    <original>E</original>
    <variation>K</variation>
    <location>
        <position position="186"/>
    </location>
</feature>
<feature type="sequence variant" id="VAR_002115" description="In CMTX1; dbSNP:rs1555937244." evidence="56">
    <original>K</original>
    <variation>E</variation>
    <location>
        <position position="187"/>
    </location>
</feature>
<feature type="sequence variant" id="VAR_002116" description="In CMTX1; dbSNP:rs1064794244." evidence="56">
    <original>V</original>
    <variation>G</variation>
    <location>
        <position position="189"/>
    </location>
</feature>
<feature type="sequence variant" id="VAR_002117" description="In CMTX1; dbSNP:rs770116247." evidence="56">
    <original>V</original>
    <variation>I</variation>
    <location>
        <position position="189"/>
    </location>
</feature>
<feature type="sequence variant" id="VAR_002118" description="In CMTX1." evidence="56">
    <location>
        <begin position="191"/>
        <end position="193"/>
    </location>
</feature>
<feature type="sequence variant" id="VAR_029944" description="In CMTX1." evidence="28">
    <original>T</original>
    <variation>A</variation>
    <location>
        <position position="191"/>
    </location>
</feature>
<feature type="sequence variant" id="VAR_029945" description="In CMTX1; dbSNP:rs771579861." evidence="62">
    <original>V</original>
    <variation>F</variation>
    <location>
        <position position="192"/>
    </location>
</feature>
<feature type="sequence variant" id="VAR_002119" description="In CMTX1." evidence="56">
    <original>F</original>
    <variation>C</variation>
    <location>
        <position position="193"/>
    </location>
</feature>
<feature type="sequence variant" id="VAR_029946" description="In CMTX1." evidence="8">
    <original>F</original>
    <variation>L</variation>
    <location>
        <position position="193"/>
    </location>
</feature>
<feature type="sequence variant" id="VAR_002120" description="In CMTX1; dbSNP:rs587777878." evidence="55">
    <original>M</original>
    <variation>V</variation>
    <location>
        <position position="194"/>
    </location>
</feature>
<feature type="sequence variant" id="VAR_002121" description="In CMTX1." evidence="56">
    <original>S</original>
    <variation>F</variation>
    <location>
        <position position="198"/>
    </location>
</feature>
<feature type="sequence variant" id="VAR_002122" description="In CMTX1." evidence="19 53 56">
    <original>G</original>
    <variation>R</variation>
    <location>
        <position position="199"/>
    </location>
</feature>
<feature type="sequence variant" id="VAR_002123" description="In CMTX1; severe." evidence="56 58">
    <original>C</original>
    <variation>R</variation>
    <location>
        <position position="201"/>
    </location>
</feature>
<feature type="sequence variant" id="VAR_029947" description="In CMTX1." evidence="28">
    <original>C</original>
    <variation>Y</variation>
    <location>
        <position position="201"/>
    </location>
</feature>
<feature type="sequence variant" id="VAR_002124" description="In CMTX1." evidence="19 57">
    <original>I</original>
    <variation>N</variation>
    <location>
        <position position="203"/>
    </location>
</feature>
<feature type="sequence variant" id="VAR_002125" description="In CMTX1." evidence="61">
    <original>L</original>
    <variation>F</variation>
    <location>
        <position position="204"/>
    </location>
</feature>
<feature type="sequence variant" id="VAR_029948" description="In CMTX1." evidence="56">
    <original>L</original>
    <variation>V</variation>
    <location>
        <position position="204"/>
    </location>
</feature>
<feature type="sequence variant" id="VAR_029949" description="In CMTX1; localized to the endoplasmic reticulum." evidence="21 27">
    <original>N</original>
    <variation>I</variation>
    <location>
        <position position="205"/>
    </location>
</feature>
<feature type="sequence variant" id="VAR_002126" description="In CMTX1; mild; dbSNP:rs104894822." evidence="3 19 29 56 57 59">
    <original>N</original>
    <variation>S</variation>
    <location>
        <position position="205"/>
    </location>
</feature>
<feature type="sequence variant" id="VAR_029950" description="In CMTX1." evidence="15">
    <original>E</original>
    <variation>G</variation>
    <location>
        <position position="208"/>
    </location>
</feature>
<feature type="sequence variant" id="VAR_002127" description="In CMTX1; non-detectable levels of hemichannel activation and non-detectable levels of electrical coupling; dbSNP:rs1555937270." evidence="5 8 41 56">
    <original>E</original>
    <variation>K</variation>
    <location>
        <position position="208"/>
    </location>
</feature>
<feature type="sequence variant" id="VAR_029951" description="In CMTX1." evidence="26">
    <location>
        <position position="209"/>
    </location>
</feature>
<feature type="sequence variant" id="VAR_029952" description="In CMTX1." evidence="14">
    <original>Y</original>
    <variation>H</variation>
    <location>
        <position position="211"/>
    </location>
</feature>
<feature type="sequence variant" id="VAR_002128" description="In CMTX1." evidence="19 57">
    <original>II</original>
    <variation>L</variation>
    <location>
        <begin position="213"/>
        <end position="214"/>
    </location>
</feature>
<feature type="sequence variant" id="VAR_029953" description="In CMTX1; localized mainly on the cell membrane forming gap junction-like plaques; dbSNP:rs753503984." evidence="27">
    <original>I</original>
    <variation>V</variation>
    <location>
        <position position="213"/>
    </location>
</feature>
<feature type="sequence variant" id="VAR_029954" description="In CMTX1; non-detectable levels of hemichannel activation and non-detectable levels of electrical coupling; dbSNP:rs864622215." evidence="5">
    <original>R</original>
    <variation>Q</variation>
    <location>
        <position position="215"/>
    </location>
</feature>
<feature type="sequence variant" id="VAR_002129" description="In CMTX1; mild/moderate; non-functional channel; dbSNP:rs879254099." evidence="5 7 16 19 21 41 44 54 56">
    <original>R</original>
    <variation>W</variation>
    <location>
        <position position="215"/>
    </location>
</feature>
<feature type="sequence variant" id="VAR_002130" description="In CMTX1; localized mainly on the cell membrane forming gap junction-like plaques; dbSNP:rs144381053." evidence="27 56">
    <original>R</original>
    <variation>C</variation>
    <location>
        <position position="219"/>
    </location>
</feature>
<feature type="sequence variant" id="VAR_002131" description="In CMTX1; localized mainly on the cell membrane forming gap junction-like plaques; dbSNP:rs199834862." evidence="27 56">
    <original>R</original>
    <variation>H</variation>
    <location>
        <position position="219"/>
    </location>
</feature>
<feature type="sequence variant" id="VAR_002132" description="In CMTX1; localized mainly on the cell membrane forming gap junction-like plaques; dbSNP:rs104894814." evidence="27 56">
    <original>R</original>
    <variation>G</variation>
    <location>
        <position position="220"/>
    </location>
</feature>
<feature type="sequence variant" id="VAR_002133" description="In CMTX1; localized mainly on the cell membrane forming gap junction-like plaques; dbSNP:rs587781246." evidence="27 56">
    <original>R</original>
    <variation>C</variation>
    <location>
        <position position="230"/>
    </location>
</feature>
<feature type="sequence variant" id="VAR_002134" description="In CMTX1; localized mainly on the cell membrane forming gap junction-like plaques; dbSNP:rs780335726." evidence="27 56">
    <original>R</original>
    <variation>L</variation>
    <location>
        <position position="230"/>
    </location>
</feature>
<feature type="sequence variant" id="VAR_002135" description="In CMTX1; the mutation causes abnormal hemichannel opening with excessive permeability of the plasma membrane and decreased cell survival; dbSNP:rs104894825." evidence="35 56">
    <original>F</original>
    <variation>C</variation>
    <location>
        <position position="235"/>
    </location>
</feature>
<feature type="sequence variant" id="VAR_002136" description="In CMTX1; localized mainly on the cell membrane forming gap junction-like plaques; dbSNP:rs776206757." evidence="5 27 51 56">
    <original>R</original>
    <variation>H</variation>
    <location>
        <position position="238"/>
    </location>
</feature>
<feature type="sequence variant" id="VAR_029955" description="In CMTX1; localized mainly on the cell membrane forming gap junction-like plaques." evidence="27 62">
    <original>L</original>
    <variation>I</variation>
    <location>
        <position position="239"/>
    </location>
</feature>
<feature type="sequence variant" id="VAR_029956" description="In CMTX1; dbSNP:rs587777879." evidence="26">
    <original>R</original>
    <variation>C</variation>
    <location>
        <position position="264"/>
    </location>
</feature>
<feature type="sequence variant" id="VAR_029957" description="In CMTX1; forms channels normally." evidence="5">
    <original>C</original>
    <variation>G</variation>
    <location>
        <position position="280"/>
    </location>
</feature>
<feature type="sequence conflict" description="In Ref. 6; AAA75086." evidence="66" ref="6">
    <original>HS</original>
    <variation>IL</variation>
    <location>
        <begin position="16"/>
        <end position="17"/>
    </location>
</feature>
<feature type="helix" evidence="71">
    <location>
        <begin position="3"/>
        <end position="11"/>
    </location>
</feature>
<feature type="helix" evidence="69">
    <location>
        <begin position="19"/>
        <end position="40"/>
    </location>
</feature>
<feature type="turn" evidence="69">
    <location>
        <begin position="41"/>
        <end position="43"/>
    </location>
</feature>
<feature type="turn" evidence="69">
    <location>
        <begin position="45"/>
        <end position="50"/>
    </location>
</feature>
<feature type="strand" evidence="69">
    <location>
        <begin position="52"/>
        <end position="54"/>
    </location>
</feature>
<feature type="helix" evidence="69">
    <location>
        <begin position="60"/>
        <end position="68"/>
    </location>
</feature>
<feature type="helix" evidence="69">
    <location>
        <begin position="73"/>
        <end position="102"/>
    </location>
</feature>
<feature type="helix" evidence="69">
    <location>
        <begin position="130"/>
        <end position="156"/>
    </location>
</feature>
<feature type="strand" evidence="70">
    <location>
        <begin position="159"/>
        <end position="161"/>
    </location>
</feature>
<feature type="strand" evidence="69">
    <location>
        <begin position="164"/>
        <end position="168"/>
    </location>
</feature>
<feature type="strand" evidence="72">
    <location>
        <begin position="173"/>
        <end position="175"/>
    </location>
</feature>
<feature type="strand" evidence="69">
    <location>
        <begin position="177"/>
        <end position="180"/>
    </location>
</feature>
<feature type="helix" evidence="69">
    <location>
        <begin position="184"/>
        <end position="216"/>
    </location>
</feature>
<keyword id="KW-0002">3D-structure</keyword>
<keyword id="KW-0965">Cell junction</keyword>
<keyword id="KW-1003">Cell membrane</keyword>
<keyword id="KW-0144">Charcot-Marie-Tooth disease</keyword>
<keyword id="KW-0213">Dejerine-Sottas syndrome</keyword>
<keyword id="KW-0225">Disease variant</keyword>
<keyword id="KW-0303">Gap junction</keyword>
<keyword id="KW-0472">Membrane</keyword>
<keyword id="KW-0523">Neurodegeneration</keyword>
<keyword id="KW-0622">Neuropathy</keyword>
<keyword id="KW-0597">Phosphoprotein</keyword>
<keyword id="KW-1267">Proteomics identification</keyword>
<keyword id="KW-1185">Reference proteome</keyword>
<keyword id="KW-0812">Transmembrane</keyword>
<keyword id="KW-1133">Transmembrane helix</keyword>
<accession>P08034</accession>
<accession>B2R8R2</accession>
<accession>D3DVV2</accession>
<accession>Q5U0S4</accession>
<dbReference type="EMBL" id="X04325">
    <property type="protein sequence ID" value="CAA27856.1"/>
    <property type="molecule type" value="mRNA"/>
</dbReference>
<dbReference type="EMBL" id="AK313474">
    <property type="protein sequence ID" value="BAG36259.1"/>
    <property type="molecule type" value="mRNA"/>
</dbReference>
<dbReference type="EMBL" id="BT019329">
    <property type="protein sequence ID" value="AAV38136.1"/>
    <property type="molecule type" value="mRNA"/>
</dbReference>
<dbReference type="EMBL" id="CH471132">
    <property type="protein sequence ID" value="EAX05305.1"/>
    <property type="molecule type" value="Genomic_DNA"/>
</dbReference>
<dbReference type="EMBL" id="CH471132">
    <property type="protein sequence ID" value="EAX05306.1"/>
    <property type="molecule type" value="Genomic_DNA"/>
</dbReference>
<dbReference type="EMBL" id="BC002805">
    <property type="protein sequence ID" value="AAH02805.1"/>
    <property type="molecule type" value="mRNA"/>
</dbReference>
<dbReference type="EMBL" id="BC022426">
    <property type="protein sequence ID" value="AAH22426.1"/>
    <property type="molecule type" value="mRNA"/>
</dbReference>
<dbReference type="EMBL" id="BC039198">
    <property type="protein sequence ID" value="AAH39198.1"/>
    <property type="molecule type" value="mRNA"/>
</dbReference>
<dbReference type="EMBL" id="L47127">
    <property type="protein sequence ID" value="AAA75086.1"/>
    <property type="molecule type" value="Genomic_DNA"/>
</dbReference>
<dbReference type="CCDS" id="CCDS14408.1"/>
<dbReference type="PIR" id="B29005">
    <property type="entry name" value="B29005"/>
</dbReference>
<dbReference type="RefSeq" id="NP_000157.1">
    <property type="nucleotide sequence ID" value="NM_000166.6"/>
</dbReference>
<dbReference type="RefSeq" id="NP_001091111.1">
    <property type="nucleotide sequence ID" value="NM_001097642.3"/>
</dbReference>
<dbReference type="RefSeq" id="XP_011529209.1">
    <property type="nucleotide sequence ID" value="XM_011530907.3"/>
</dbReference>
<dbReference type="RefSeq" id="XP_016884897.1">
    <property type="nucleotide sequence ID" value="XM_017029408.1"/>
</dbReference>
<dbReference type="RefSeq" id="XP_054182801.1">
    <property type="nucleotide sequence ID" value="XM_054326826.1"/>
</dbReference>
<dbReference type="RefSeq" id="XP_054182802.1">
    <property type="nucleotide sequence ID" value="XM_054326827.1"/>
</dbReference>
<dbReference type="PDB" id="5KK9">
    <property type="method" value="NMR"/>
    <property type="chains" value="A=1-22"/>
</dbReference>
<dbReference type="PDB" id="7ZXM">
    <property type="method" value="EM"/>
    <property type="resolution" value="2.14 A"/>
    <property type="chains" value="A/B/C/D/E/F/G/H/I/J/K/L=1-283"/>
</dbReference>
<dbReference type="PDB" id="7ZXN">
    <property type="method" value="EM"/>
    <property type="resolution" value="3.06 A"/>
    <property type="chains" value="A/B/C/D/E/F=1-283"/>
</dbReference>
<dbReference type="PDB" id="7ZXO">
    <property type="method" value="EM"/>
    <property type="resolution" value="2.50 A"/>
    <property type="chains" value="A/B/C/D/E/F/G/H/I/J/K/L=1-283"/>
</dbReference>
<dbReference type="PDB" id="7ZXP">
    <property type="method" value="EM"/>
    <property type="resolution" value="2.39 A"/>
    <property type="chains" value="A/B/C/D/E/F/G/H/I/J/K/L=1-283"/>
</dbReference>
<dbReference type="PDB" id="7ZXQ">
    <property type="method" value="EM"/>
    <property type="resolution" value="3.53 A"/>
    <property type="chains" value="A/B/C/D/E/F=1-283"/>
</dbReference>
<dbReference type="PDB" id="7ZXT">
    <property type="method" value="EM"/>
    <property type="resolution" value="2.90 A"/>
    <property type="chains" value="A/B/C/D/E/F=1-283"/>
</dbReference>
<dbReference type="PDB" id="8QJF">
    <property type="method" value="EM"/>
    <property type="resolution" value="2.86 A"/>
    <property type="chains" value="A/C/D/E/F/G/H/I/J/K/L/M=1-283"/>
</dbReference>
<dbReference type="PDB" id="8QJH">
    <property type="method" value="EM"/>
    <property type="resolution" value="2.91 A"/>
    <property type="chains" value="A/B/C/D/E/F/G/H/I/J/K/L=1-283"/>
</dbReference>
<dbReference type="PDB" id="8QK6">
    <property type="method" value="EM"/>
    <property type="resolution" value="3.18 A"/>
    <property type="chains" value="A/B/C/D/E/F=1-283"/>
</dbReference>
<dbReference type="PDB" id="8QKI">
    <property type="method" value="EM"/>
    <property type="resolution" value="3.46 A"/>
    <property type="chains" value="A/B/C/D/E/F=1-283"/>
</dbReference>
<dbReference type="PDBsum" id="5KK9"/>
<dbReference type="PDBsum" id="7ZXM"/>
<dbReference type="PDBsum" id="7ZXN"/>
<dbReference type="PDBsum" id="7ZXO"/>
<dbReference type="PDBsum" id="7ZXP"/>
<dbReference type="PDBsum" id="7ZXQ"/>
<dbReference type="PDBsum" id="7ZXT"/>
<dbReference type="PDBsum" id="8QJF"/>
<dbReference type="PDBsum" id="8QJH"/>
<dbReference type="PDBsum" id="8QK6"/>
<dbReference type="PDBsum" id="8QKI"/>
<dbReference type="EMDB" id="EMD-15010"/>
<dbReference type="EMDB" id="EMD-15011"/>
<dbReference type="EMDB" id="EMD-15012"/>
<dbReference type="EMDB" id="EMD-15013"/>
<dbReference type="EMDB" id="EMD-15014"/>
<dbReference type="EMDB" id="EMD-15016"/>
<dbReference type="EMDB" id="EMD-18446"/>
<dbReference type="EMDB" id="EMD-18447"/>
<dbReference type="EMDB" id="EMD-18457"/>
<dbReference type="EMDB" id="EMD-18463"/>
<dbReference type="SMR" id="P08034"/>
<dbReference type="BioGRID" id="108971">
    <property type="interactions" value="78"/>
</dbReference>
<dbReference type="FunCoup" id="P08034">
    <property type="interactions" value="6"/>
</dbReference>
<dbReference type="IntAct" id="P08034">
    <property type="interactions" value="45"/>
</dbReference>
<dbReference type="STRING" id="9606.ENSP00000354900"/>
<dbReference type="ChEMBL" id="CHEMBL4879427"/>
<dbReference type="TCDB" id="1.A.24.1.3">
    <property type="family name" value="the gap junction-forming connexin (connexin) family"/>
</dbReference>
<dbReference type="iPTMnet" id="P08034"/>
<dbReference type="PhosphoSitePlus" id="P08034"/>
<dbReference type="SwissPalm" id="P08034"/>
<dbReference type="BioMuta" id="GJB1"/>
<dbReference type="DMDM" id="117688"/>
<dbReference type="jPOST" id="P08034"/>
<dbReference type="MassIVE" id="P08034"/>
<dbReference type="PaxDb" id="9606-ENSP00000363134"/>
<dbReference type="PeptideAtlas" id="P08034"/>
<dbReference type="ProteomicsDB" id="52060"/>
<dbReference type="Antibodypedia" id="542">
    <property type="antibodies" value="578 antibodies from 33 providers"/>
</dbReference>
<dbReference type="DNASU" id="2705"/>
<dbReference type="Ensembl" id="ENST00000361726.7">
    <property type="protein sequence ID" value="ENSP00000354900.6"/>
    <property type="gene ID" value="ENSG00000169562.13"/>
</dbReference>
<dbReference type="Ensembl" id="ENST00000374029.2">
    <property type="protein sequence ID" value="ENSP00000363141.1"/>
    <property type="gene ID" value="ENSG00000169562.13"/>
</dbReference>
<dbReference type="Ensembl" id="ENST00000447581.2">
    <property type="protein sequence ID" value="ENSP00000407223.2"/>
    <property type="gene ID" value="ENSG00000169562.13"/>
</dbReference>
<dbReference type="Ensembl" id="ENST00000645009.2">
    <property type="protein sequence ID" value="ENSP00000494142.2"/>
    <property type="gene ID" value="ENSG00000169562.13"/>
</dbReference>
<dbReference type="Ensembl" id="ENST00000646835.1">
    <property type="protein sequence ID" value="ENSP00000494596.1"/>
    <property type="gene ID" value="ENSG00000169562.13"/>
</dbReference>
<dbReference type="Ensembl" id="ENST00000647424.1">
    <property type="protein sequence ID" value="ENSP00000495960.1"/>
    <property type="gene ID" value="ENSG00000169562.13"/>
</dbReference>
<dbReference type="Ensembl" id="ENST00000674549.1">
    <property type="protein sequence ID" value="ENSP00000502766.1"/>
    <property type="gene ID" value="ENSG00000169562.13"/>
</dbReference>
<dbReference type="Ensembl" id="ENST00000674844.1">
    <property type="protein sequence ID" value="ENSP00000502556.1"/>
    <property type="gene ID" value="ENSG00000169562.13"/>
</dbReference>
<dbReference type="Ensembl" id="ENST00000675209.1">
    <property type="protein sequence ID" value="ENSP00000501813.1"/>
    <property type="gene ID" value="ENSG00000169562.13"/>
</dbReference>
<dbReference type="Ensembl" id="ENST00000675368.1">
    <property type="protein sequence ID" value="ENSP00000501757.1"/>
    <property type="gene ID" value="ENSG00000169562.13"/>
</dbReference>
<dbReference type="Ensembl" id="ENST00000675609.1">
    <property type="protein sequence ID" value="ENSP00000501571.1"/>
    <property type="gene ID" value="ENSG00000169562.13"/>
</dbReference>
<dbReference type="GeneID" id="2705"/>
<dbReference type="KEGG" id="hsa:2705"/>
<dbReference type="MANE-Select" id="ENST00000361726.7">
    <property type="protein sequence ID" value="ENSP00000354900.6"/>
    <property type="RefSeq nucleotide sequence ID" value="NM_000166.6"/>
    <property type="RefSeq protein sequence ID" value="NP_000157.1"/>
</dbReference>
<dbReference type="UCSC" id="uc004dzf.4">
    <property type="organism name" value="human"/>
</dbReference>
<dbReference type="AGR" id="HGNC:4283"/>
<dbReference type="CTD" id="2705"/>
<dbReference type="DisGeNET" id="2705"/>
<dbReference type="GeneCards" id="GJB1"/>
<dbReference type="GeneReviews" id="GJB1"/>
<dbReference type="HGNC" id="HGNC:4283">
    <property type="gene designation" value="GJB1"/>
</dbReference>
<dbReference type="HPA" id="ENSG00000169562">
    <property type="expression patterns" value="Group enriched (brain, liver, pancreas)"/>
</dbReference>
<dbReference type="MalaCards" id="GJB1"/>
<dbReference type="MIM" id="145900">
    <property type="type" value="phenotype"/>
</dbReference>
<dbReference type="MIM" id="302800">
    <property type="type" value="phenotype"/>
</dbReference>
<dbReference type="MIM" id="304040">
    <property type="type" value="gene"/>
</dbReference>
<dbReference type="neXtProt" id="NX_P08034"/>
<dbReference type="OpenTargets" id="ENSG00000169562"/>
<dbReference type="Orphanet" id="101075">
    <property type="disease" value="X-linked Charcot-Marie-Tooth disease type 1"/>
</dbReference>
<dbReference type="Orphanet" id="1175">
    <property type="disease" value="X-linked progressive cerebellar ataxia"/>
</dbReference>
<dbReference type="PharmGKB" id="PA28694"/>
<dbReference type="VEuPathDB" id="HostDB:ENSG00000169562"/>
<dbReference type="eggNOG" id="ENOG502R1QN">
    <property type="taxonomic scope" value="Eukaryota"/>
</dbReference>
<dbReference type="GeneTree" id="ENSGT01030000234513"/>
<dbReference type="HOGENOM" id="CLU_037388_4_1_1"/>
<dbReference type="InParanoid" id="P08034"/>
<dbReference type="OMA" id="CIILNMA"/>
<dbReference type="OrthoDB" id="8934037at2759"/>
<dbReference type="PAN-GO" id="P08034">
    <property type="GO annotations" value="3 GO annotations based on evolutionary models"/>
</dbReference>
<dbReference type="PhylomeDB" id="P08034"/>
<dbReference type="TreeFam" id="TF329606"/>
<dbReference type="PathwayCommons" id="P08034"/>
<dbReference type="Reactome" id="R-HSA-190704">
    <property type="pathway name" value="Oligomerization of connexins into connexons"/>
</dbReference>
<dbReference type="Reactome" id="R-HSA-190827">
    <property type="pathway name" value="Transport of connexins along the secretory pathway"/>
</dbReference>
<dbReference type="Reactome" id="R-HSA-190861">
    <property type="pathway name" value="Gap junction assembly"/>
</dbReference>
<dbReference type="SignaLink" id="P08034"/>
<dbReference type="SIGNOR" id="P08034"/>
<dbReference type="BioGRID-ORCS" id="2705">
    <property type="hits" value="17 hits in 771 CRISPR screens"/>
</dbReference>
<dbReference type="ChiTaRS" id="GJB1">
    <property type="organism name" value="human"/>
</dbReference>
<dbReference type="GeneWiki" id="GJB1"/>
<dbReference type="GenomeRNAi" id="2705"/>
<dbReference type="Pharos" id="P08034">
    <property type="development level" value="Tbio"/>
</dbReference>
<dbReference type="PRO" id="PR:P08034"/>
<dbReference type="Proteomes" id="UP000005640">
    <property type="component" value="Chromosome X"/>
</dbReference>
<dbReference type="RNAct" id="P08034">
    <property type="molecule type" value="protein"/>
</dbReference>
<dbReference type="Bgee" id="ENSG00000169562">
    <property type="expression patterns" value="Expressed in right lobe of liver and 165 other cell types or tissues"/>
</dbReference>
<dbReference type="ExpressionAtlas" id="P08034">
    <property type="expression patterns" value="baseline and differential"/>
</dbReference>
<dbReference type="GO" id="GO:0005922">
    <property type="term" value="C:connexin complex"/>
    <property type="evidence" value="ECO:0000318"/>
    <property type="project" value="GO_Central"/>
</dbReference>
<dbReference type="GO" id="GO:0005789">
    <property type="term" value="C:endoplasmic reticulum membrane"/>
    <property type="evidence" value="ECO:0000304"/>
    <property type="project" value="Reactome"/>
</dbReference>
<dbReference type="GO" id="GO:0005243">
    <property type="term" value="F:gap junction channel activity"/>
    <property type="evidence" value="ECO:0000318"/>
    <property type="project" value="GO_Central"/>
</dbReference>
<dbReference type="GO" id="GO:0042802">
    <property type="term" value="F:identical protein binding"/>
    <property type="evidence" value="ECO:0007669"/>
    <property type="project" value="Ensembl"/>
</dbReference>
<dbReference type="GO" id="GO:0007267">
    <property type="term" value="P:cell-cell signaling"/>
    <property type="evidence" value="ECO:0000318"/>
    <property type="project" value="GO_Central"/>
</dbReference>
<dbReference type="GO" id="GO:0016264">
    <property type="term" value="P:gap junction assembly"/>
    <property type="evidence" value="ECO:0000304"/>
    <property type="project" value="Reactome"/>
</dbReference>
<dbReference type="GO" id="GO:0007399">
    <property type="term" value="P:nervous system development"/>
    <property type="evidence" value="ECO:0000304"/>
    <property type="project" value="ProtInc"/>
</dbReference>
<dbReference type="FunFam" id="1.20.1440.80:FF:000001">
    <property type="entry name" value="Gap junction alpha-1"/>
    <property type="match status" value="1"/>
</dbReference>
<dbReference type="Gene3D" id="1.20.1440.80">
    <property type="entry name" value="Gap junction channel protein cysteine-rich domain"/>
    <property type="match status" value="1"/>
</dbReference>
<dbReference type="InterPro" id="IPR000500">
    <property type="entry name" value="Connexin"/>
</dbReference>
<dbReference type="InterPro" id="IPR002267">
    <property type="entry name" value="Connexin32"/>
</dbReference>
<dbReference type="InterPro" id="IPR019570">
    <property type="entry name" value="Connexin_CCC"/>
</dbReference>
<dbReference type="InterPro" id="IPR017990">
    <property type="entry name" value="Connexin_CS"/>
</dbReference>
<dbReference type="InterPro" id="IPR013092">
    <property type="entry name" value="Connexin_N"/>
</dbReference>
<dbReference type="InterPro" id="IPR038359">
    <property type="entry name" value="Connexin_N_sf"/>
</dbReference>
<dbReference type="PANTHER" id="PTHR11984">
    <property type="entry name" value="CONNEXIN"/>
    <property type="match status" value="1"/>
</dbReference>
<dbReference type="PANTHER" id="PTHR11984:SF20">
    <property type="entry name" value="GAP JUNCTION BETA-1 PROTEIN"/>
    <property type="match status" value="1"/>
</dbReference>
<dbReference type="Pfam" id="PF00029">
    <property type="entry name" value="Connexin"/>
    <property type="match status" value="1"/>
</dbReference>
<dbReference type="PRINTS" id="PR00206">
    <property type="entry name" value="CONNEXIN"/>
</dbReference>
<dbReference type="PRINTS" id="PR01138">
    <property type="entry name" value="CONNEXINB1"/>
</dbReference>
<dbReference type="SMART" id="SM00037">
    <property type="entry name" value="CNX"/>
    <property type="match status" value="1"/>
</dbReference>
<dbReference type="SMART" id="SM01089">
    <property type="entry name" value="Connexin_CCC"/>
    <property type="match status" value="1"/>
</dbReference>
<dbReference type="PROSITE" id="PS00407">
    <property type="entry name" value="CONNEXINS_1"/>
    <property type="match status" value="1"/>
</dbReference>
<dbReference type="PROSITE" id="PS00408">
    <property type="entry name" value="CONNEXINS_2"/>
    <property type="match status" value="1"/>
</dbReference>
<gene>
    <name type="primary">GJB1</name>
    <name type="synonym">CX32</name>
</gene>
<sequence>MNWTGLYTLLSGVNRHSTAIGRVWLSVIFIFRIMVLVVAAESVWGDEKSSFICNTLQPGCNSVCYDQFFPISHVRLWSLQLILVSTPALLVAMHVAHQQHIEKKMLRLEGHGDPLHLEEVKRHKVHISGTLWWTYVISVVFRLLFEAVFMYVFYLLYPGYAMVRLVKCDVYPCPNTVDCFVSRPTEKTVFTVFMLAASGICIILNVAEVVYLIIRACARRAQRRSNPPSRKGSGFGHRLSPEYKQNEINKLLSEQDGSLKDILRRSPGTGAGLAEKSDRCSAC</sequence>
<evidence type="ECO:0000250" key="1"/>
<evidence type="ECO:0000250" key="2">
    <source>
        <dbReference type="UniProtKB" id="P08033"/>
    </source>
</evidence>
<evidence type="ECO:0000269" key="3">
    <source>
    </source>
</evidence>
<evidence type="ECO:0000269" key="4">
    <source>
    </source>
</evidence>
<evidence type="ECO:0000269" key="5">
    <source>
    </source>
</evidence>
<evidence type="ECO:0000269" key="6">
    <source>
    </source>
</evidence>
<evidence type="ECO:0000269" key="7">
    <source>
    </source>
</evidence>
<evidence type="ECO:0000269" key="8">
    <source>
    </source>
</evidence>
<evidence type="ECO:0000269" key="9">
    <source>
    </source>
</evidence>
<evidence type="ECO:0000269" key="10">
    <source>
    </source>
</evidence>
<evidence type="ECO:0000269" key="11">
    <source>
    </source>
</evidence>
<evidence type="ECO:0000269" key="12">
    <source>
    </source>
</evidence>
<evidence type="ECO:0000269" key="13">
    <source>
    </source>
</evidence>
<evidence type="ECO:0000269" key="14">
    <source>
    </source>
</evidence>
<evidence type="ECO:0000269" key="15">
    <source>
    </source>
</evidence>
<evidence type="ECO:0000269" key="16">
    <source>
    </source>
</evidence>
<evidence type="ECO:0000269" key="17">
    <source>
    </source>
</evidence>
<evidence type="ECO:0000269" key="18">
    <source>
    </source>
</evidence>
<evidence type="ECO:0000269" key="19">
    <source>
    </source>
</evidence>
<evidence type="ECO:0000269" key="20">
    <source>
    </source>
</evidence>
<evidence type="ECO:0000269" key="21">
    <source>
    </source>
</evidence>
<evidence type="ECO:0000269" key="22">
    <source>
    </source>
</evidence>
<evidence type="ECO:0000269" key="23">
    <source>
    </source>
</evidence>
<evidence type="ECO:0000269" key="24">
    <source>
    </source>
</evidence>
<evidence type="ECO:0000269" key="25">
    <source>
    </source>
</evidence>
<evidence type="ECO:0000269" key="26">
    <source>
    </source>
</evidence>
<evidence type="ECO:0000269" key="27">
    <source>
    </source>
</evidence>
<evidence type="ECO:0000269" key="28">
    <source>
    </source>
</evidence>
<evidence type="ECO:0000269" key="29">
    <source>
    </source>
</evidence>
<evidence type="ECO:0000269" key="30">
    <source>
    </source>
</evidence>
<evidence type="ECO:0000269" key="31">
    <source>
    </source>
</evidence>
<evidence type="ECO:0000269" key="32">
    <source>
    </source>
</evidence>
<evidence type="ECO:0000269" key="33">
    <source>
    </source>
</evidence>
<evidence type="ECO:0000269" key="34">
    <source>
    </source>
</evidence>
<evidence type="ECO:0000269" key="35">
    <source>
    </source>
</evidence>
<evidence type="ECO:0000269" key="36">
    <source>
    </source>
</evidence>
<evidence type="ECO:0000269" key="37">
    <source>
    </source>
</evidence>
<evidence type="ECO:0000269" key="38">
    <source>
    </source>
</evidence>
<evidence type="ECO:0000269" key="39">
    <source>
    </source>
</evidence>
<evidence type="ECO:0000269" key="40">
    <source>
    </source>
</evidence>
<evidence type="ECO:0000269" key="41">
    <source>
    </source>
</evidence>
<evidence type="ECO:0000269" key="42">
    <source>
    </source>
</evidence>
<evidence type="ECO:0000269" key="43">
    <source>
    </source>
</evidence>
<evidence type="ECO:0000269" key="44">
    <source>
    </source>
</evidence>
<evidence type="ECO:0000269" key="45">
    <source>
    </source>
</evidence>
<evidence type="ECO:0000269" key="46">
    <source>
    </source>
</evidence>
<evidence type="ECO:0000269" key="47">
    <source>
    </source>
</evidence>
<evidence type="ECO:0000269" key="48">
    <source>
    </source>
</evidence>
<evidence type="ECO:0000269" key="49">
    <source>
    </source>
</evidence>
<evidence type="ECO:0000269" key="50">
    <source>
    </source>
</evidence>
<evidence type="ECO:0000269" key="51">
    <source>
    </source>
</evidence>
<evidence type="ECO:0000269" key="52">
    <source>
    </source>
</evidence>
<evidence type="ECO:0000269" key="53">
    <source>
    </source>
</evidence>
<evidence type="ECO:0000269" key="54">
    <source>
    </source>
</evidence>
<evidence type="ECO:0000269" key="55">
    <source>
    </source>
</evidence>
<evidence type="ECO:0000269" key="56">
    <source>
    </source>
</evidence>
<evidence type="ECO:0000269" key="57">
    <source>
    </source>
</evidence>
<evidence type="ECO:0000269" key="58">
    <source>
    </source>
</evidence>
<evidence type="ECO:0000269" key="59">
    <source>
    </source>
</evidence>
<evidence type="ECO:0000269" key="60">
    <source>
    </source>
</evidence>
<evidence type="ECO:0000269" key="61">
    <source>
    </source>
</evidence>
<evidence type="ECO:0000269" key="62">
    <source>
    </source>
</evidence>
<evidence type="ECO:0000269" key="63">
    <source>
    </source>
</evidence>
<evidence type="ECO:0000269" key="64">
    <source>
    </source>
</evidence>
<evidence type="ECO:0000269" key="65">
    <source ref="12"/>
</evidence>
<evidence type="ECO:0000305" key="66"/>
<evidence type="ECO:0000305" key="67">
    <source>
    </source>
</evidence>
<evidence type="ECO:0007744" key="68">
    <source>
    </source>
</evidence>
<evidence type="ECO:0007829" key="69">
    <source>
        <dbReference type="PDB" id="7ZXM"/>
    </source>
</evidence>
<evidence type="ECO:0007829" key="70">
    <source>
        <dbReference type="PDB" id="7ZXP"/>
    </source>
</evidence>
<evidence type="ECO:0007829" key="71">
    <source>
        <dbReference type="PDB" id="8QJF"/>
    </source>
</evidence>
<evidence type="ECO:0007829" key="72">
    <source>
        <dbReference type="PDB" id="8QKI"/>
    </source>
</evidence>
<comment type="function">
    <text>One gap junction consists of a cluster of closely packed pairs of transmembrane channels, the connexons, through which materials of low MW diffuse from one cell to a neighboring cell.</text>
</comment>
<comment type="subunit">
    <text evidence="1">A connexon is composed of a hexamer of connexins. Interacts with CNST (By similarity).</text>
</comment>
<comment type="interaction">
    <interactant intactId="EBI-17565645">
        <id>P08034</id>
    </interactant>
    <interactant intactId="EBI-11976321">
        <id>O95236-2</id>
        <label>APOL3</label>
    </interactant>
    <organismsDiffer>false</organismsDiffer>
    <experiments>3</experiments>
</comment>
<comment type="interaction">
    <interactant intactId="EBI-17565645">
        <id>P08034</id>
    </interactant>
    <interactant intactId="EBI-3922513">
        <id>O95393</id>
        <label>BMP10</label>
    </interactant>
    <organismsDiffer>false</organismsDiffer>
    <experiments>3</experiments>
</comment>
<comment type="interaction">
    <interactant intactId="EBI-17565645">
        <id>P08034</id>
    </interactant>
    <interactant intactId="EBI-12822627">
        <id>O14523</id>
        <label>C2CD2L</label>
    </interactant>
    <organismsDiffer>false</organismsDiffer>
    <experiments>3</experiments>
</comment>
<comment type="interaction">
    <interactant intactId="EBI-17565645">
        <id>P08034</id>
    </interactant>
    <interactant intactId="EBI-6139068">
        <id>P11049</id>
        <label>CD37</label>
    </interactant>
    <organismsDiffer>false</organismsDiffer>
    <experiments>3</experiments>
</comment>
<comment type="interaction">
    <interactant intactId="EBI-17565645">
        <id>P08034</id>
    </interactant>
    <interactant intactId="EBI-7797864">
        <id>P11912</id>
        <label>CD79A</label>
    </interactant>
    <organismsDiffer>false</organismsDiffer>
    <experiments>3</experiments>
</comment>
<comment type="interaction">
    <interactant intactId="EBI-17565645">
        <id>P08034</id>
    </interactant>
    <interactant intactId="EBI-358858">
        <id>O14735</id>
        <label>CDIPT</label>
    </interactant>
    <organismsDiffer>false</organismsDiffer>
    <experiments>3</experiments>
</comment>
<comment type="interaction">
    <interactant intactId="EBI-17565645">
        <id>P08034</id>
    </interactant>
    <interactant intactId="EBI-11989440">
        <id>Q9BXN2-6</id>
        <label>CLEC7A</label>
    </interactant>
    <organismsDiffer>false</organismsDiffer>
    <experiments>3</experiments>
</comment>
<comment type="interaction">
    <interactant intactId="EBI-17565645">
        <id>P08034</id>
    </interactant>
    <interactant intactId="EBI-7247651">
        <id>Q96MX0</id>
        <label>CMTM3</label>
    </interactant>
    <organismsDiffer>false</organismsDiffer>
    <experiments>3</experiments>
</comment>
<comment type="interaction">
    <interactant intactId="EBI-17565645">
        <id>P08034</id>
    </interactant>
    <interactant intactId="EBI-11522780">
        <id>Q96DZ9-2</id>
        <label>CMTM5</label>
    </interactant>
    <organismsDiffer>false</organismsDiffer>
    <experiments>3</experiments>
</comment>
<comment type="interaction">
    <interactant intactId="EBI-17565645">
        <id>P08034</id>
    </interactant>
    <interactant intactId="EBI-372265">
        <id>P21964</id>
        <label>COMT</label>
    </interactant>
    <organismsDiffer>false</organismsDiffer>
    <experiments>3</experiments>
</comment>
<comment type="interaction">
    <interactant intactId="EBI-17565645">
        <id>P08034</id>
    </interactant>
    <interactant intactId="EBI-12019274">
        <id>Q4LDR2</id>
        <label>CTXN3</label>
    </interactant>
    <organismsDiffer>false</organismsDiffer>
    <experiments>3</experiments>
</comment>
<comment type="interaction">
    <interactant intactId="EBI-17565645">
        <id>P08034</id>
    </interactant>
    <interactant intactId="EBI-3911467">
        <id>Q07325</id>
        <label>CXCL9</label>
    </interactant>
    <organismsDiffer>false</organismsDiffer>
    <experiments>3</experiments>
</comment>
<comment type="interaction">
    <interactant intactId="EBI-17565645">
        <id>P08034</id>
    </interactant>
    <interactant intactId="EBI-1753674">
        <id>P52803</id>
        <label>EFNA5</label>
    </interactant>
    <organismsDiffer>false</organismsDiffer>
    <experiments>3</experiments>
</comment>
<comment type="interaction">
    <interactant intactId="EBI-17565645">
        <id>P08034</id>
    </interactant>
    <interactant intactId="EBI-3907816">
        <id>P54852</id>
        <label>EMP3</label>
    </interactant>
    <organismsDiffer>false</organismsDiffer>
    <experiments>3</experiments>
</comment>
<comment type="interaction">
    <interactant intactId="EBI-17565645">
        <id>P08034</id>
    </interactant>
    <interactant intactId="EBI-3905204">
        <id>P29033</id>
        <label>GJB2</label>
    </interactant>
    <organismsDiffer>false</organismsDiffer>
    <experiments>3</experiments>
</comment>
<comment type="interaction">
    <interactant intactId="EBI-17565645">
        <id>P08034</id>
    </interactant>
    <interactant intactId="EBI-10178951">
        <id>O00155</id>
        <label>GPR25</label>
    </interactant>
    <organismsDiffer>false</organismsDiffer>
    <experiments>3</experiments>
</comment>
<comment type="interaction">
    <interactant intactId="EBI-17565645">
        <id>P08034</id>
    </interactant>
    <interactant intactId="EBI-725665">
        <id>Q9Y5U9</id>
        <label>IER3IP1</label>
    </interactant>
    <organismsDiffer>false</organismsDiffer>
    <experiments>3</experiments>
</comment>
<comment type="interaction">
    <interactant intactId="EBI-17565645">
        <id>P08034</id>
    </interactant>
    <interactant intactId="EBI-2568251">
        <id>P11215</id>
        <label>ITGAM</label>
    </interactant>
    <organismsDiffer>false</organismsDiffer>
    <experiments>3</experiments>
</comment>
<comment type="interaction">
    <interactant intactId="EBI-17565645">
        <id>P08034</id>
    </interactant>
    <interactant intactId="EBI-8070286">
        <id>O43561-2</id>
        <label>LAT</label>
    </interactant>
    <organismsDiffer>false</organismsDiffer>
    <experiments>3</experiments>
</comment>
<comment type="interaction">
    <interactant intactId="EBI-17565645">
        <id>P08034</id>
    </interactant>
    <interactant intactId="EBI-17566767">
        <id>Q6ZUX7</id>
        <label>LHFPL2</label>
    </interactant>
    <organismsDiffer>false</organismsDiffer>
    <experiments>3</experiments>
</comment>
<comment type="interaction">
    <interactant intactId="EBI-17565645">
        <id>P08034</id>
    </interactant>
    <interactant intactId="EBI-3932027">
        <id>P21145</id>
        <label>MAL</label>
    </interactant>
    <organismsDiffer>false</organismsDiffer>
    <experiments>3</experiments>
</comment>
<comment type="interaction">
    <interactant intactId="EBI-17565645">
        <id>P08034</id>
    </interactant>
    <interactant intactId="EBI-944295">
        <id>Q969L2</id>
        <label>MAL2</label>
    </interactant>
    <organismsDiffer>false</organismsDiffer>
    <experiments>3</experiments>
</comment>
<comment type="interaction">
    <interactant intactId="EBI-17565645">
        <id>P08034</id>
    </interactant>
    <interactant intactId="EBI-11956541">
        <id>Q9GZY8-5</id>
        <label>MFF</label>
    </interactant>
    <organismsDiffer>false</organismsDiffer>
    <experiments>3</experiments>
</comment>
<comment type="interaction">
    <interactant intactId="EBI-17565645">
        <id>P08034</id>
    </interactant>
    <interactant intactId="EBI-12070086">
        <id>Q5J8X5</id>
        <label>MS4A13</label>
    </interactant>
    <organismsDiffer>false</organismsDiffer>
    <experiments>3</experiments>
</comment>
<comment type="interaction">
    <interactant intactId="EBI-17565645">
        <id>P08034</id>
    </interactant>
    <interactant intactId="EBI-1246182">
        <id>Q9NX14</id>
        <label>NDUFB11</label>
    </interactant>
    <organismsDiffer>false</organismsDiffer>
    <experiments>3</experiments>
</comment>
<comment type="interaction">
    <interactant intactId="EBI-17565645">
        <id>P08034</id>
    </interactant>
    <interactant intactId="EBI-9550165">
        <id>Q0D2K0</id>
        <label>NIPAL4</label>
    </interactant>
    <organismsDiffer>false</organismsDiffer>
    <experiments>3</experiments>
</comment>
<comment type="interaction">
    <interactant intactId="EBI-17565645">
        <id>P08034</id>
    </interactant>
    <interactant intactId="EBI-742898">
        <id>P43378</id>
        <label>PTPN9</label>
    </interactant>
    <organismsDiffer>false</organismsDiffer>
    <experiments>3</experiments>
</comment>
<comment type="interaction">
    <interactant intactId="EBI-17565645">
        <id>P08034</id>
    </interactant>
    <interactant intactId="EBI-10244780">
        <id>Q5QGT7</id>
        <label>RTP2</label>
    </interactant>
    <organismsDiffer>false</organismsDiffer>
    <experiments>3</experiments>
</comment>
<comment type="interaction">
    <interactant intactId="EBI-17565645">
        <id>P08034</id>
    </interactant>
    <interactant intactId="EBI-2684237">
        <id>O00767</id>
        <label>SCD</label>
    </interactant>
    <organismsDiffer>false</organismsDiffer>
    <experiments>3</experiments>
</comment>
<comment type="interaction">
    <interactant intactId="EBI-17565645">
        <id>P08034</id>
    </interactant>
    <interactant intactId="EBI-17284533">
        <id>A2A2V5</id>
        <label>SERTM1</label>
    </interactant>
    <organismsDiffer>false</organismsDiffer>
    <experiments>3</experiments>
</comment>
<comment type="interaction">
    <interactant intactId="EBI-17565645">
        <id>P08034</id>
    </interactant>
    <interactant intactId="EBI-12854384">
        <id>Q9Y666-2</id>
        <label>SLC12A7</label>
    </interactant>
    <organismsDiffer>false</organismsDiffer>
    <experiments>3</experiments>
</comment>
<comment type="interaction">
    <interactant intactId="EBI-17565645">
        <id>P08034</id>
    </interactant>
    <interactant intactId="EBI-727240">
        <id>Q9UNK0</id>
        <label>STX8</label>
    </interactant>
    <organismsDiffer>false</organismsDiffer>
    <experiments>3</experiments>
</comment>
<comment type="interaction">
    <interactant intactId="EBI-17565645">
        <id>P08034</id>
    </interactant>
    <interactant intactId="EBI-10329860">
        <id>Q9Y6I9</id>
        <label>TEX264</label>
    </interactant>
    <organismsDiffer>false</organismsDiffer>
    <experiments>3</experiments>
</comment>
<comment type="interaction">
    <interactant intactId="EBI-17565645">
        <id>P08034</id>
    </interactant>
    <interactant intactId="EBI-714319">
        <id>P02787</id>
        <label>TF</label>
    </interactant>
    <organismsDiffer>false</organismsDiffer>
    <experiments>3</experiments>
</comment>
<comment type="interaction">
    <interactant intactId="EBI-17565645">
        <id>P08034</id>
    </interactant>
    <interactant intactId="EBI-8650934">
        <id>P48230</id>
        <label>TM4SF4</label>
    </interactant>
    <organismsDiffer>false</organismsDiffer>
    <experiments>3</experiments>
</comment>
<comment type="interaction">
    <interactant intactId="EBI-17565645">
        <id>P08034</id>
    </interactant>
    <interactant intactId="EBI-10171534">
        <id>A0PK00</id>
        <label>TMEM120B</label>
    </interactant>
    <organismsDiffer>false</organismsDiffer>
    <experiments>3</experiments>
</comment>
<comment type="interaction">
    <interactant intactId="EBI-17565645">
        <id>P08034</id>
    </interactant>
    <interactant intactId="EBI-2339195">
        <id>Q9P0S9</id>
        <label>TMEM14C</label>
    </interactant>
    <organismsDiffer>false</organismsDiffer>
    <experiments>3</experiments>
</comment>
<comment type="interaction">
    <interactant intactId="EBI-17565645">
        <id>P08034</id>
    </interactant>
    <interactant intactId="EBI-741829">
        <id>Q96HH6</id>
        <label>TMEM19</label>
    </interactant>
    <organismsDiffer>false</organismsDiffer>
    <experiments>3</experiments>
</comment>
<comment type="interaction">
    <interactant intactId="EBI-17565645">
        <id>P08034</id>
    </interactant>
    <interactant intactId="EBI-10173151">
        <id>A2RU14</id>
        <label>TMEM218</label>
    </interactant>
    <organismsDiffer>false</organismsDiffer>
    <experiments>3</experiments>
</comment>
<comment type="interaction">
    <interactant intactId="EBI-17565645">
        <id>P08034</id>
    </interactant>
    <interactant intactId="EBI-7333781">
        <id>Q9Y2Y6</id>
        <label>TMEM98</label>
    </interactant>
    <organismsDiffer>false</organismsDiffer>
    <experiments>3</experiments>
</comment>
<comment type="interaction">
    <interactant intactId="EBI-17565645">
        <id>P08034</id>
    </interactant>
    <interactant intactId="EBI-10243654">
        <id>Q5BVD1</id>
        <label>TTMP</label>
    </interactant>
    <organismsDiffer>false</organismsDiffer>
    <experiments>3</experiments>
</comment>
<comment type="interaction">
    <interactant intactId="EBI-17565645">
        <id>P08034</id>
    </interactant>
    <interactant intactId="EBI-12237619">
        <id>O75841</id>
        <label>UPK1B</label>
    </interactant>
    <organismsDiffer>false</organismsDiffer>
    <experiments>3</experiments>
</comment>
<comment type="interaction">
    <interactant intactId="EBI-17565645">
        <id>P08034</id>
    </interactant>
    <interactant intactId="EBI-6622053">
        <id>P15692-12</id>
        <label>VEGFA</label>
    </interactant>
    <organismsDiffer>false</organismsDiffer>
    <experiments>3</experiments>
</comment>
<comment type="interaction">
    <interactant intactId="EBI-17565645">
        <id>P08034</id>
    </interactant>
    <interactant intactId="EBI-751210">
        <id>Q96EC8</id>
        <label>YIPF6</label>
    </interactant>
    <organismsDiffer>false</organismsDiffer>
    <experiments>3</experiments>
</comment>
<comment type="subcellular location">
    <subcellularLocation>
        <location>Cell membrane</location>
        <topology>Multi-pass membrane protein</topology>
    </subcellularLocation>
    <subcellularLocation>
        <location>Cell junction</location>
        <location>Gap junction</location>
    </subcellularLocation>
</comment>
<comment type="disease" evidence="3 4 5 6 7 8 9 10 11 12 13 14 15 16 17 18 19 20 21 22 23 24 25 26 28 29 30 31 32 33 34 35 37 38 39 40 41 42 43 44 45 46 47 48 49 50 51 52 53 54 55 56 58 59 60 61 62 63 64 65">
    <disease id="DI-00293">
        <name>Charcot-Marie-Tooth disease, X-linked dominant, 1</name>
        <acronym>CMTX1</acronym>
        <description>A form of Charcot-Marie-Tooth disease, a disorder of the peripheral nervous system, characterized by progressive weakness and atrophy, initially of the peroneal muscles and later of the distal muscles of the arms. Charcot-Marie-Tooth disease is classified in two main groups on the basis of electrophysiologic properties and histopathology: primary peripheral demyelinating neuropathies characterized by severely reduced motor nerve conduction velocities (NCVs) (less than 38m/s) and segmental demyelination and remyelination, and primary peripheral axonal neuropathies characterized by normal or mildly reduced NCVs and chronic axonal degeneration and regeneration on nerve biopsy. CMTX1 has both demyelinating and axonal features. Central nervous system involvement may occur.</description>
        <dbReference type="MIM" id="302800"/>
    </disease>
    <text>The disease is caused by variants affecting the gene represented in this entry.</text>
</comment>
<comment type="disease" evidence="36">
    <disease id="DI-00387">
        <name>Dejerine-Sottas syndrome</name>
        <acronym>DSS</acronym>
        <description>A severe degenerating neuropathy of the demyelinating Charcot-Marie-Tooth disease category, with onset by age 2 years. Characterized by motor and sensory neuropathy with very slow nerve conduction velocities, increased cerebrospinal fluid protein concentrations, hypertrophic nerve changes, delayed age of walking as well as areflexia. There are both autosomal dominant and autosomal recessive forms of Dejerine-Sottas syndrome.</description>
        <dbReference type="MIM" id="145900"/>
    </disease>
    <text>The gene represented in this entry may act as a disease modifier.</text>
</comment>
<comment type="similarity">
    <text evidence="66">Belongs to the connexin family. Beta-type (group I) subfamily.</text>
</comment>
<comment type="online information" name="Inherited peripheral neuropathies mutation db">
    <link uri="https://uantwerpen.vib.be/CMTMutations"/>
</comment>
<comment type="online information" name="Connexin-deafness homepage">
    <link uri="http://perelman.crg.es/deafness/"/>
</comment>
<organism>
    <name type="scientific">Homo sapiens</name>
    <name type="common">Human</name>
    <dbReference type="NCBI Taxonomy" id="9606"/>
    <lineage>
        <taxon>Eukaryota</taxon>
        <taxon>Metazoa</taxon>
        <taxon>Chordata</taxon>
        <taxon>Craniata</taxon>
        <taxon>Vertebrata</taxon>
        <taxon>Euteleostomi</taxon>
        <taxon>Mammalia</taxon>
        <taxon>Eutheria</taxon>
        <taxon>Euarchontoglires</taxon>
        <taxon>Primates</taxon>
        <taxon>Haplorrhini</taxon>
        <taxon>Catarrhini</taxon>
        <taxon>Hominidae</taxon>
        <taxon>Homo</taxon>
    </lineage>
</organism>
<proteinExistence type="evidence at protein level"/>
<reference key="1">
    <citation type="journal article" date="1986" name="J. Cell Biol.">
        <title>Cloning and characterization of human and rat liver cDNAs coding for a gap junction protein.</title>
        <authorList>
            <person name="Kumar N.M."/>
            <person name="Gilula N.B."/>
        </authorList>
    </citation>
    <scope>NUCLEOTIDE SEQUENCE [MRNA]</scope>
    <source>
        <tissue>Liver</tissue>
    </source>
</reference>
<reference key="2">
    <citation type="journal article" date="2004" name="Nat. Genet.">
        <title>Complete sequencing and characterization of 21,243 full-length human cDNAs.</title>
        <authorList>
            <person name="Ota T."/>
            <person name="Suzuki Y."/>
            <person name="Nishikawa T."/>
            <person name="Otsuki T."/>
            <person name="Sugiyama T."/>
            <person name="Irie R."/>
            <person name="Wakamatsu A."/>
            <person name="Hayashi K."/>
            <person name="Sato H."/>
            <person name="Nagai K."/>
            <person name="Kimura K."/>
            <person name="Makita H."/>
            <person name="Sekine M."/>
            <person name="Obayashi M."/>
            <person name="Nishi T."/>
            <person name="Shibahara T."/>
            <person name="Tanaka T."/>
            <person name="Ishii S."/>
            <person name="Yamamoto J."/>
            <person name="Saito K."/>
            <person name="Kawai Y."/>
            <person name="Isono Y."/>
            <person name="Nakamura Y."/>
            <person name="Nagahari K."/>
            <person name="Murakami K."/>
            <person name="Yasuda T."/>
            <person name="Iwayanagi T."/>
            <person name="Wagatsuma M."/>
            <person name="Shiratori A."/>
            <person name="Sudo H."/>
            <person name="Hosoiri T."/>
            <person name="Kaku Y."/>
            <person name="Kodaira H."/>
            <person name="Kondo H."/>
            <person name="Sugawara M."/>
            <person name="Takahashi M."/>
            <person name="Kanda K."/>
            <person name="Yokoi T."/>
            <person name="Furuya T."/>
            <person name="Kikkawa E."/>
            <person name="Omura Y."/>
            <person name="Abe K."/>
            <person name="Kamihara K."/>
            <person name="Katsuta N."/>
            <person name="Sato K."/>
            <person name="Tanikawa M."/>
            <person name="Yamazaki M."/>
            <person name="Ninomiya K."/>
            <person name="Ishibashi T."/>
            <person name="Yamashita H."/>
            <person name="Murakawa K."/>
            <person name="Fujimori K."/>
            <person name="Tanai H."/>
            <person name="Kimata M."/>
            <person name="Watanabe M."/>
            <person name="Hiraoka S."/>
            <person name="Chiba Y."/>
            <person name="Ishida S."/>
            <person name="Ono Y."/>
            <person name="Takiguchi S."/>
            <person name="Watanabe S."/>
            <person name="Yosida M."/>
            <person name="Hotuta T."/>
            <person name="Kusano J."/>
            <person name="Kanehori K."/>
            <person name="Takahashi-Fujii A."/>
            <person name="Hara H."/>
            <person name="Tanase T.-O."/>
            <person name="Nomura Y."/>
            <person name="Togiya S."/>
            <person name="Komai F."/>
            <person name="Hara R."/>
            <person name="Takeuchi K."/>
            <person name="Arita M."/>
            <person name="Imose N."/>
            <person name="Musashino K."/>
            <person name="Yuuki H."/>
            <person name="Oshima A."/>
            <person name="Sasaki N."/>
            <person name="Aotsuka S."/>
            <person name="Yoshikawa Y."/>
            <person name="Matsunawa H."/>
            <person name="Ichihara T."/>
            <person name="Shiohata N."/>
            <person name="Sano S."/>
            <person name="Moriya S."/>
            <person name="Momiyama H."/>
            <person name="Satoh N."/>
            <person name="Takami S."/>
            <person name="Terashima Y."/>
            <person name="Suzuki O."/>
            <person name="Nakagawa S."/>
            <person name="Senoh A."/>
            <person name="Mizoguchi H."/>
            <person name="Goto Y."/>
            <person name="Shimizu F."/>
            <person name="Wakebe H."/>
            <person name="Hishigaki H."/>
            <person name="Watanabe T."/>
            <person name="Sugiyama A."/>
            <person name="Takemoto M."/>
            <person name="Kawakami B."/>
            <person name="Yamazaki M."/>
            <person name="Watanabe K."/>
            <person name="Kumagai A."/>
            <person name="Itakura S."/>
            <person name="Fukuzumi Y."/>
            <person name="Fujimori Y."/>
            <person name="Komiyama M."/>
            <person name="Tashiro H."/>
            <person name="Tanigami A."/>
            <person name="Fujiwara T."/>
            <person name="Ono T."/>
            <person name="Yamada K."/>
            <person name="Fujii Y."/>
            <person name="Ozaki K."/>
            <person name="Hirao M."/>
            <person name="Ohmori Y."/>
            <person name="Kawabata A."/>
            <person name="Hikiji T."/>
            <person name="Kobatake N."/>
            <person name="Inagaki H."/>
            <person name="Ikema Y."/>
            <person name="Okamoto S."/>
            <person name="Okitani R."/>
            <person name="Kawakami T."/>
            <person name="Noguchi S."/>
            <person name="Itoh T."/>
            <person name="Shigeta K."/>
            <person name="Senba T."/>
            <person name="Matsumura K."/>
            <person name="Nakajima Y."/>
            <person name="Mizuno T."/>
            <person name="Morinaga M."/>
            <person name="Sasaki M."/>
            <person name="Togashi T."/>
            <person name="Oyama M."/>
            <person name="Hata H."/>
            <person name="Watanabe M."/>
            <person name="Komatsu T."/>
            <person name="Mizushima-Sugano J."/>
            <person name="Satoh T."/>
            <person name="Shirai Y."/>
            <person name="Takahashi Y."/>
            <person name="Nakagawa K."/>
            <person name="Okumura K."/>
            <person name="Nagase T."/>
            <person name="Nomura N."/>
            <person name="Kikuchi H."/>
            <person name="Masuho Y."/>
            <person name="Yamashita R."/>
            <person name="Nakai K."/>
            <person name="Yada T."/>
            <person name="Nakamura Y."/>
            <person name="Ohara O."/>
            <person name="Isogai T."/>
            <person name="Sugano S."/>
        </authorList>
    </citation>
    <scope>NUCLEOTIDE SEQUENCE [LARGE SCALE MRNA]</scope>
    <source>
        <tissue>Subthalamic nucleus</tissue>
    </source>
</reference>
<reference key="3">
    <citation type="submission" date="2004-10" db="EMBL/GenBank/DDBJ databases">
        <title>Cloning of human full-length CDSs in BD Creator(TM) system donor vector.</title>
        <authorList>
            <person name="Kalnine N."/>
            <person name="Chen X."/>
            <person name="Rolfs A."/>
            <person name="Halleck A."/>
            <person name="Hines L."/>
            <person name="Eisenstein S."/>
            <person name="Koundinya M."/>
            <person name="Raphael J."/>
            <person name="Moreira D."/>
            <person name="Kelley T."/>
            <person name="LaBaer J."/>
            <person name="Lin Y."/>
            <person name="Phelan M."/>
            <person name="Farmer A."/>
        </authorList>
    </citation>
    <scope>NUCLEOTIDE SEQUENCE [LARGE SCALE MRNA]</scope>
</reference>
<reference key="4">
    <citation type="submission" date="2005-09" db="EMBL/GenBank/DDBJ databases">
        <authorList>
            <person name="Mural R.J."/>
            <person name="Istrail S."/>
            <person name="Sutton G.G."/>
            <person name="Florea L."/>
            <person name="Halpern A.L."/>
            <person name="Mobarry C.M."/>
            <person name="Lippert R."/>
            <person name="Walenz B."/>
            <person name="Shatkay H."/>
            <person name="Dew I."/>
            <person name="Miller J.R."/>
            <person name="Flanigan M.J."/>
            <person name="Edwards N.J."/>
            <person name="Bolanos R."/>
            <person name="Fasulo D."/>
            <person name="Halldorsson B.V."/>
            <person name="Hannenhalli S."/>
            <person name="Turner R."/>
            <person name="Yooseph S."/>
            <person name="Lu F."/>
            <person name="Nusskern D.R."/>
            <person name="Shue B.C."/>
            <person name="Zheng X.H."/>
            <person name="Zhong F."/>
            <person name="Delcher A.L."/>
            <person name="Huson D.H."/>
            <person name="Kravitz S.A."/>
            <person name="Mouchard L."/>
            <person name="Reinert K."/>
            <person name="Remington K.A."/>
            <person name="Clark A.G."/>
            <person name="Waterman M.S."/>
            <person name="Eichler E.E."/>
            <person name="Adams M.D."/>
            <person name="Hunkapiller M.W."/>
            <person name="Myers E.W."/>
            <person name="Venter J.C."/>
        </authorList>
    </citation>
    <scope>NUCLEOTIDE SEQUENCE [LARGE SCALE GENOMIC DNA]</scope>
</reference>
<reference key="5">
    <citation type="journal article" date="2004" name="Genome Res.">
        <title>The status, quality, and expansion of the NIH full-length cDNA project: the Mammalian Gene Collection (MGC).</title>
        <authorList>
            <consortium name="The MGC Project Team"/>
        </authorList>
    </citation>
    <scope>NUCLEOTIDE SEQUENCE [LARGE SCALE MRNA]</scope>
    <source>
        <tissue>Liver</tissue>
        <tissue>Placenta</tissue>
        <tissue>Skin</tissue>
    </source>
</reference>
<reference key="6">
    <citation type="submission" date="1995-09" db="EMBL/GenBank/DDBJ databases">
        <authorList>
            <person name="Neuhaus I.M."/>
            <person name="Bone L."/>
            <person name="Wang S."/>
            <person name="Ionasescu V."/>
            <person name="Werner R."/>
        </authorList>
    </citation>
    <scope>NUCLEOTIDE SEQUENCE [GENOMIC DNA] OF 1-17</scope>
</reference>
<reference key="7">
    <citation type="journal article" date="1988" name="EMBO J.">
        <title>Topology of the 32-kd liver gap junction protein determined by site-directed antibody localizations.</title>
        <authorList>
            <person name="Milks L.C."/>
            <person name="Kumar N.M."/>
            <person name="Houghten R."/>
            <person name="Unwin N."/>
            <person name="Gilula N.B."/>
        </authorList>
    </citation>
    <scope>TOPOLOGY</scope>
</reference>
<reference key="8">
    <citation type="journal article" date="2014" name="J. Proteomics">
        <title>An enzyme assisted RP-RPLC approach for in-depth analysis of human liver phosphoproteome.</title>
        <authorList>
            <person name="Bian Y."/>
            <person name="Song C."/>
            <person name="Cheng K."/>
            <person name="Dong M."/>
            <person name="Wang F."/>
            <person name="Huang J."/>
            <person name="Sun D."/>
            <person name="Wang L."/>
            <person name="Ye M."/>
            <person name="Zou H."/>
        </authorList>
    </citation>
    <scope>PHOSPHORYLATION [LARGE SCALE ANALYSIS] AT SER-258; SER-266 AND SER-277</scope>
    <scope>IDENTIFICATION BY MASS SPECTROMETRY [LARGE SCALE ANALYSIS]</scope>
    <source>
        <tissue>Liver</tissue>
    </source>
</reference>
<reference key="9">
    <citation type="journal article" date="2004" name="Mol. Cell">
        <title>A Calpha model for the transmembrane alpha helices of gap junction intercellular channels.</title>
        <authorList>
            <person name="Fleishman S.J."/>
            <person name="Unger V.M."/>
            <person name="Yeager M."/>
            <person name="Ben-Tal N."/>
        </authorList>
    </citation>
    <scope>3D-STRUCTURE MODELING OF 19-209</scope>
    <scope>STRUCTURE BY ELECTRON MICROSCOPY (20 ANGSTROMS)</scope>
</reference>
<reference key="10">
    <citation type="journal article" date="1999" name="Hum. Mutat.">
        <title>Mutations in the peripheral myelin genes and associated genes in inherited peripheral neuropathies.</title>
        <authorList>
            <person name="Nelis E."/>
            <person name="Haites N."/>
            <person name="van Broeckhoven C."/>
        </authorList>
    </citation>
    <scope>VARIANTS CMTX1 GLY-11; PRO-39; PHE-81; PRO-83; CYS-135; ILE-149; SER-158 AND ARG-173</scope>
</reference>
<reference key="11">
    <citation type="journal article" date="1993" name="Science">
        <title>Connexin mutations in X-linked Charcot-Marie-Tooth disease.</title>
        <authorList>
            <person name="Bergoffen J."/>
            <person name="Schere S.S."/>
            <person name="Wang S."/>
            <person name="Oronzi Scott M."/>
            <person name="Bone L.J."/>
            <person name="Paul D.L."/>
            <person name="Chen K."/>
            <person name="Lensch M.W."/>
            <person name="Chance P.F."/>
            <person name="Fischbeck K.H."/>
        </authorList>
    </citation>
    <scope>VARIANTS CMTX1 SER-12; MET-139; TRP-142; ARG-156; SER-172 AND LYS-186</scope>
</reference>
<reference key="12">
    <citation type="journal article" date="1994" name="Am. J. Hum. Genet.">
        <title>Mutational studies in X-linked Charcot-Marie-Tooth disease (CMTX).</title>
        <authorList>
            <person name="Cherryson A.K."/>
            <person name="Yeung L."/>
            <person name="Kennerson M.L."/>
            <person name="Nicholson G.A."/>
        </authorList>
    </citation>
    <scope>VARIANTS CMTX1 MET-35; ALA-158; THR-182 AND 111-HIS--HIS-116 DEL</scope>
</reference>
<reference key="13">
    <citation type="journal article" date="1994" name="Hum. Mol. Genet.">
        <title>Mutations in the connexin 32 gene in X-linked dominant Charcot-Marie-Tooth disease (CMTX1).</title>
        <authorList>
            <person name="Fairweather N."/>
            <person name="Bell C."/>
            <person name="Cochrane S."/>
            <person name="Chelly J."/>
            <person name="Wang S."/>
            <person name="Mostacciuolo M.L."/>
            <person name="Monaco A.P."/>
            <person name="Haites N.E."/>
        </authorList>
    </citation>
    <scope>VARIANTS CMTX1 GLN-15; PHE-60; ILE-63; LEU-143 DEL; LYS-208 AND TRP-215</scope>
</reference>
<reference key="14">
    <citation type="journal article" date="1994" name="Hum. Mol. Genet.">
        <title>Point mutations of the connexin32 (GJB1) gene in X-linked dominant Charcot-Marie-Tooth neuropathy.</title>
        <authorList>
            <person name="Ionasescu V."/>
            <person name="Searby C."/>
            <person name="Ionasescu R."/>
        </authorList>
    </citation>
    <scope>VARIANTS CMTX1 GLY-102 AND TRP-142</scope>
</reference>
<reference key="15">
    <citation type="journal article" date="1994" name="Hum. Mol. Genet.">
        <title>X-linked dominant Charcot-Marie-Tooth neuropathy: valine-38-methionine substitution of connexin32.</title>
        <authorList>
            <person name="Orth U."/>
            <person name="Fairweather N."/>
            <person name="Exler M.-C."/>
            <person name="Schwinger E."/>
            <person name="Gal A."/>
        </authorList>
    </citation>
    <scope>VARIANT CMTX1 MET-38</scope>
</reference>
<reference key="16">
    <citation type="journal article" date="1995" name="Neurology">
        <title>New connexin32 mutations associated with X-linked Charcot-Marie-Tooth disease.</title>
        <authorList>
            <person name="Bone L.J."/>
            <person name="Dahl N."/>
            <person name="Lensch M.W."/>
            <person name="Chance P.F."/>
            <person name="Kelly T."/>
            <person name="le Guern E."/>
            <person name="Magi S."/>
            <person name="Parry G."/>
            <person name="Shapiro H."/>
            <person name="Wang S."/>
            <person name="Fischbeck K.H."/>
        </authorList>
    </citation>
    <scope>VARIANTS CMTX1 LEU-13; ASN-30; CYS-65; MET-95; ARG-133 AND ARG-156</scope>
</reference>
<reference key="17">
    <citation type="journal article" date="1996" name="Am. J. Med. Genet.">
        <title>Correlation between connexin 32 gene mutations and clinical phenotype in X-linked dominant Charcot-Marie-Tooth neuropathy.</title>
        <authorList>
            <person name="Ionasescu V."/>
            <person name="Ionasescu R."/>
            <person name="Searby C."/>
        </authorList>
    </citation>
    <scope>VARIANTS CMTX1 SER-3; GLN-22; SER-77; ARG-80; GLY-102; TRP-142 AND TRP-164</scope>
</reference>
<reference key="18">
    <citation type="journal article" date="1996" name="Hum. Genet.">
        <title>X-linked dominant Charcot-Marie-Tooth neuropathy (CMTX): new mutations in the connexin32 gene.</title>
        <authorList>
            <person name="Ressot C."/>
            <person name="Latour P."/>
            <person name="Blanquet-Grossard F."/>
            <person name="Sturtz F."/>
            <person name="Duthel S."/>
            <person name="Battin J."/>
            <person name="Corbillon E."/>
            <person name="Ollagnon E."/>
            <person name="Serville F."/>
            <person name="Vandenberghe A."/>
            <person name="Dautigny A."/>
            <person name="Pham-Dinh D."/>
        </authorList>
    </citation>
    <scope>VARIANTS CMTX1 GLY-22; PRO-22 AND TRP-215</scope>
</reference>
<reference key="19">
    <citation type="journal article" date="1996" name="Hum. Mutat.">
        <title>Novel mutations in the connexin 32 gene associated with X-linked Charcot-Marie tooth disease.</title>
        <authorList>
            <person name="Tan C.C."/>
            <person name="Ainsworth P.J."/>
            <person name="Hahn A.F."/>
            <person name="Macleod P.M."/>
        </authorList>
    </citation>
    <scope>VARIANTS CMTX1 THR-34; GLN-75 AND TRP-107</scope>
</reference>
<reference key="20">
    <citation type="journal article" date="1996" name="Hum. Mutat.">
        <title>Novel missense mutation of the connexin32 (GJB1) gene in X-linked dominant Charcot-Marie-Tooth neuropathy.</title>
        <authorList>
            <person name="Schiavon F."/>
            <person name="Fracasso C."/>
            <person name="Mostacciuolo M.L."/>
        </authorList>
    </citation>
    <scope>VARIANT CMTX1 CYS-7</scope>
</reference>
<reference key="21">
    <citation type="journal article" date="1996" name="Hum. Mutat.">
        <title>Two novel mutations (C53S, S26L) in the connexin32 of Charcot-Marie-Tooth disease type X families.</title>
        <authorList>
            <person name="Yoshimura T."/>
            <person name="Ohnishi A."/>
            <person name="Yamamoto T."/>
            <person name="Fukushima Y."/>
            <person name="Kitani M."/>
            <person name="Kobayashi T."/>
        </authorList>
    </citation>
    <scope>VARIANTS CMTX1 LEU-26 AND SER-53</scope>
</reference>
<reference key="22">
    <citation type="journal article" date="1996" name="Hum. Mutat.">
        <title>A point mutation in codon 3 of connexin-32 is associated with X-linked Charcot-Marie-Tooth neuropathy.</title>
        <authorList>
            <person name="Gupta S."/>
            <person name="Benstead T."/>
            <person name="Neumann P."/>
            <person name="Guernsey D."/>
        </authorList>
    </citation>
    <scope>VARIANT CMTX1 SER-3</scope>
</reference>
<reference key="23">
    <citation type="journal article" date="1996" name="J. Med. Genet.">
        <title>Arginine-164-tryptophan substitution in connexin32 associated with X linked dominant Charcot-Marie-Tooth disease.</title>
        <authorList>
            <person name="Oterino A."/>
            <person name="Monton F.I."/>
            <person name="Cabrera V.M."/>
            <person name="Pinto F."/>
            <person name="Gonzalez A."/>
            <person name="Lavilla N.R."/>
        </authorList>
    </citation>
    <scope>VARIANT CMTX1 TRP-164</scope>
</reference>
<reference key="24">
    <citation type="journal article" date="1996" name="Neurology">
        <title>Linkage and mutation analysis of Charcot-Marie-Tooth neuropathy type 2 families with chromosomes 1p35-p36 and Xq13.</title>
        <authorList>
            <person name="Timmerman V."/>
            <person name="de Jonghe P."/>
            <person name="Spoelders P."/>
            <person name="Simokovic S."/>
            <person name="Loefgren A."/>
            <person name="Nelis E."/>
            <person name="Vance J."/>
            <person name="Martin J.-J."/>
            <person name="van Broeckhoven C."/>
        </authorList>
    </citation>
    <scope>VARIANT CMTX1 TYR-49</scope>
</reference>
<reference key="25">
    <citation type="journal article" date="1997" name="Eur. Neurol.">
        <title>New mutations in the X-linked form of Charcot-Marie-Tooth disease.</title>
        <authorList>
            <person name="Latour P."/>
            <person name="Fabreguette A."/>
            <person name="Ressot C."/>
            <person name="Blanquet-Grossard F."/>
            <person name="Antoine J.-C."/>
            <person name="Calvas P."/>
            <person name="Chapon F."/>
            <person name="Corbillon E."/>
            <person name="Ollagnon E."/>
            <person name="Sturtz F."/>
            <person name="Boucherat M."/>
            <person name="Chazot G."/>
            <person name="Dautigny A."/>
            <person name="Pham-Dinh D."/>
            <person name="Vandenberghe A."/>
        </authorList>
    </citation>
    <scope>VARIANTS CMTX1 VAL-34; HIS-90; TRP-107; TRP-142; PHE-156 AND LYS-186</scope>
</reference>
<reference key="26">
    <citation type="journal article" date="1997" name="Hum. Genet.">
        <title>Connexin32 gene mutations in X-linked dominant Charcot-Marie-Tooth disease (CMTX1).</title>
        <authorList>
            <person name="Janssen E.A.M."/>
            <person name="Kemp S."/>
            <person name="Hensels G.W."/>
            <person name="Sie O.G."/>
            <person name="de Die-Smulders C.E.M."/>
            <person name="Hoogendijk J.E."/>
            <person name="de Visser M."/>
            <person name="Bolhuis P.A."/>
        </authorList>
    </citation>
    <scope>VARIANTS CMTX1 TRP-15; ILE-63; CYS-65; SER-87; PRO-89; MET-139 AND ARG-199</scope>
</reference>
<reference key="27">
    <citation type="journal article" date="1997" name="Hum. Genet.">
        <title>Mutational analysis of the MPZ, PMP22 and Cx32 genes in patients of Spanish ancestry with Charcot-Marie-Tooth disease and hereditary neuropathy with liability to pressure palsies.</title>
        <authorList>
            <person name="Bort S."/>
            <person name="Nelis E."/>
            <person name="Timmerman V."/>
            <person name="Sevilla T."/>
            <person name="Cruz-Martinez A."/>
            <person name="Martinez F."/>
            <person name="Millan J.M."/>
            <person name="Arpa J."/>
            <person name="Vilchez J.J."/>
            <person name="Prieto F."/>
            <person name="van Broeckhoven C."/>
            <person name="Palau F."/>
        </authorList>
    </citation>
    <scope>VARIANTS CMTX1 ALA-23; SER-64; SER-87; TRP-164; GLN-164; SER-183; HIS-183; CYS-183 AND TRP-215</scope>
</reference>
<reference key="28">
    <citation type="journal article" date="1997" name="Hum. Genet.">
        <title>Screening for connexin 32 mutations in Charcot-Marie-Tooth disease families with possible X-linked inheritance.</title>
        <authorList>
            <person name="Silander K."/>
            <person name="Meretoja P."/>
            <person name="Pihko H."/>
            <person name="Juvonen V."/>
            <person name="Issakainen J."/>
            <person name="Aula P."/>
            <person name="Savontaus M.L."/>
        </authorList>
    </citation>
    <scope>VARIANTS CMTX1 GLN-22; GLN-75; TRP-75; TRP-107; MET-139 AND VAL-194</scope>
</reference>
<reference key="29">
    <citation type="journal article" date="1997" name="Hum. Mutat.">
        <title>Mutation analysis of the connexin 32 (Cx32) gene in Charcot-Marie-Tooth neuropathy type 1: identification of five new mutations.</title>
        <authorList>
            <person name="Nelis E."/>
            <person name="Simokovic S."/>
            <person name="Timmerman V."/>
            <person name="Loefgren A."/>
            <person name="Backhovens H."/>
            <person name="de Jonghe P."/>
            <person name="Martin J.-J."/>
            <person name="Van Broeckhoven C."/>
        </authorList>
    </citation>
    <scope>VARIANTS CMTX1 PHE-25; LEU-26; ALA-87 AND HIS-238</scope>
</reference>
<reference key="30">
    <citation type="journal article" date="1997" name="Hum. Mutat.">
        <title>Charcot-Marie-Tooth disease with intermediate motor nerve conduction velocities: characterization of 14 Cx32 mutations in 35 families.</title>
        <authorList>
            <person name="Rouger H."/>
            <person name="Leguern E."/>
            <person name="Birouk N."/>
            <person name="Gouider R."/>
            <person name="Tardieu S."/>
            <person name="Plassart E."/>
            <person name="Gugenheim M."/>
            <person name="Vallat J.-M."/>
            <person name="Louboutin J.-P."/>
            <person name="Bouche P."/>
            <person name="Agid Y."/>
            <person name="Brice A."/>
        </authorList>
    </citation>
    <scope>VARIANTS THR-34; ILE-84; MET-95; TRP-107; ARG-133; LEU-141; ALA-158; ASN-203; SER-205 AND 213-ILE-ILE-214 DELINS LEU</scope>
</reference>
<reference key="31">
    <citation type="journal article" date="1997" name="Neurobiol. Dis.">
        <title>Connexin32 and X-linked Charcot-Marie-Tooth disease.</title>
        <authorList>
            <person name="Bone L.J."/>
            <person name="Deschenes S.M."/>
            <person name="Balice-Gordon R.J."/>
            <person name="Fischbeck K.H."/>
            <person name="Scherer S.S."/>
        </authorList>
    </citation>
    <scope>VARIANTS CMTX1 ARG-3; SER-3; CYS-7; SER-12; LEU-13; MET-13; LYS-14; GLN-15; TRP-15; PRO-16; SER-20; ASP-21; GLN-22; PRO-22; GLY-22; ALA-23; PHE-25; LEU-26; ASN-28; THR-28; LEU-29; ASN-30; THR-34; VAL-34; MET-35; MET-38; VAL-40; LYS-41; LEU-44; TYR-49; SER-53; PHE-56; PHE-60; ILE-63; SER-64; CYS-65; GLN-75; PRO-75; TRP-75; SER-77; ARG-80; CYS-85; PHE-85; ALA-86; ASN-86; SER-86; ALA-87; LEU-87; SER-87; PRO-89; HIS-90; VAL-93; GLN-94; TYR-94; MET-95; TYR-100; GLY-102; GLU-103; TRP-107; 111-HIS--HIS-116 DEL; ASN-124; PRO-128; ARG-133; MET-139; TRP-142; GLU-142; LEU-143 DEL; ARG-156; PHE-156; CYS-157; ALA-158; ARG-158; HIS-160; PRO-161; TRP-164; GLN-164; SER-172; LEU-172; TYR-178; ARG-179; LEU-180; MET-181; THR-182; CYS-183; SER-183; HIS-183; THR-185 DEL; LYS-186; GLU-187; GLY-189; ILE-189; 191-THR--PHE-193 DEL; CYS-193; PHE-198; ARG-199; ARG-201; VAL-204; SER-205; LYS-208; TRP-215; CYS-219; HIS-219; GLY-220; CYS-230; LEU-230; CYS-235 AND HIS-238</scope>
</reference>
<reference key="32">
    <citation type="journal article" date="1997" name="Neurogenetics">
        <title>Mutations in the X-linked form of Charcot-Marie-Tooth disease in the French population.</title>
        <authorList>
            <person name="Latour P."/>
            <person name="Levy N."/>
            <person name="Paret M."/>
            <person name="Chapon F."/>
            <person name="Chazot G."/>
            <person name="Clavelou P."/>
            <person name="Couratier P."/>
            <person name="Dumas R."/>
            <person name="Ollagnon E."/>
            <person name="Pouget J."/>
            <person name="Setiey A."/>
            <person name="Vallat J.-M."/>
            <person name="Boucherat M."/>
            <person name="Fontes M."/>
            <person name="Vandenberghe A."/>
        </authorList>
    </citation>
    <scope>VARIANTS CMTX1 PRO-22; GLY-22; VAL-34; PRO-50; PHE-56; TRP-75; HIS-90; TRP-107; ARG-133; TRP-142; PHE-156; SER-159; ARG-184; LYS-186 AND TRP-215</scope>
</reference>
<reference key="33">
    <citation type="journal article" date="1998" name="Am. J. Med. Genet.">
        <title>Four novel mutations of the connexin 32 gene in four Japanese families with Charcot-Marie-Tooth disease type 1.</title>
        <authorList>
            <person name="Ikegami T."/>
            <person name="Lin C."/>
            <person name="Kato M."/>
            <person name="Itoh A."/>
            <person name="Nonaka I."/>
            <person name="Kurimura M."/>
            <person name="Hirayabashi H."/>
            <person name="Shinohara Y."/>
            <person name="Mochizuki A."/>
            <person name="Hayasaka K."/>
        </authorList>
    </citation>
    <scope>VARIANTS CMTX1 MET-37; HIS-57; LEU-172 AND ALA-177</scope>
</reference>
<reference key="34">
    <citation type="journal article" date="1998" name="Cell Biol. Int.">
        <title>X-linked Charcot-Marie-Tooth disease and connexin32.</title>
        <authorList>
            <person name="Ionasescu V.V."/>
        </authorList>
    </citation>
    <scope>VARIANTS CMTX1 SER-3; GLN-22; ALA-70; SER-77; ARG-80; MET-95; GLY-102; TRP-142; TRP-164 AND SER-180</scope>
</reference>
<reference key="35">
    <citation type="journal article" date="1998" name="Hum. Mutat. Suppl.">
        <title>A novel mutation (C201R) in the transmembrane domain of connexin 32 in severe X-linked Charcot-Marie-Tooth disease.</title>
        <authorList>
            <person name="Sillen A."/>
            <person name="Anneren G."/>
            <person name="Dahl N."/>
        </authorList>
    </citation>
    <scope>VARIANT CMTX1 ARG-201</scope>
</reference>
<reference key="36">
    <citation type="journal article" date="1998" name="Hum. Mutat. Suppl.">
        <title>Mutation analysis in Charcot-Marie-Tooth disease type 1 (CMT1).</title>
        <authorList>
            <person name="Sorour E."/>
            <person name="Upadhyaya M."/>
        </authorList>
    </citation>
    <scope>VARIANTS CMTX1 TRP-15; PHE-60; ALA-86; TYR-100; CYS-133 AND SER-205</scope>
</reference>
<reference key="37">
    <citation type="journal article" date="1998" name="Hum. Mutat.">
        <title>Spectrum of mutations in Finnish patients with Charcot-Marie-Tooth disease and related neuropathies.</title>
        <authorList>
            <person name="Silander K."/>
            <person name="Meretoja P."/>
            <person name="Juvonen V."/>
            <person name="Ignatius J."/>
            <person name="Pihko H."/>
            <person name="Saarinen A."/>
            <person name="Wallden T."/>
            <person name="Herrgaard E."/>
            <person name="Aula P."/>
            <person name="Savontaus M.-L."/>
        </authorList>
    </citation>
    <scope>VARIANTS CMTX1 GLN-22; ARG-58; ILE-63; LEU-172; ASP-175 AND PHE-204</scope>
</reference>
<reference key="38">
    <citation type="journal article" date="1998" name="J. Neurosci. Res.">
        <title>Mutations of connexin32 in Charcot-Marie-Tooth disease type X interfere with cell-to-cell communication but not cell proliferation and myelin-specific gene expression.</title>
        <authorList>
            <person name="Yoshimura T."/>
            <person name="Satake M."/>
            <person name="Ohnishi A."/>
            <person name="Tsutsumi Y."/>
            <person name="Fujikura Y."/>
        </authorList>
    </citation>
    <scope>VARIANTS CMTX1 SER-53 AND ARG-172</scope>
    <scope>CHARACTERIZATION OF VARIANTS CMTX1 SER-53 AND ARG-172</scope>
</reference>
<reference key="39">
    <citation type="journal article" date="1998" name="Neurology">
        <title>Efficient neurophysiologic selection of X-linked Charcot-Marie-Tooth families: ten novel mutations.</title>
        <authorList>
            <person name="Nicholson G.A."/>
            <person name="Yeung L."/>
            <person name="Corbett A."/>
        </authorList>
    </citation>
    <scope>VARIANTS CMTX1 TRP-9; GLN-22; THR-28; THR-30; THR-34; MET-35; TRP-107; MET-127; PRO-131; ALA-158; THR-182; PHE-192 AND ILE-239</scope>
</reference>
<reference key="40">
    <citation type="journal article" date="1999" name="Ann. N. Y. Acad. Sci.">
        <title>HMSN and HNPP. Laboratory service provision in the south west of England -- two years' experience.</title>
        <authorList>
            <person name="Williams M.M."/>
            <person name="Tyfield L.A."/>
            <person name="Jardine P."/>
            <person name="Lunt P.W."/>
            <person name="Stevens D.L."/>
            <person name="Turnpenny P.D."/>
        </authorList>
    </citation>
    <scope>VARIANTS CMTX1 GLN-22; VAL-39; MET-43; PHE-60; THR-104; MET-139; GLN-142; TRP-142; VAL-149 AND GLU-177</scope>
</reference>
<reference key="41">
    <citation type="journal article" date="1999" name="Hum. Mutat.">
        <title>Three novel mutations in the gap junction beta 1 (GJB1) gene coding region identified in Charcot-Marie-Tooth patients of Greek origin: T55I, R164Q, V120E.</title>
        <authorList>
            <person name="Karadimas C."/>
            <person name="Panas M."/>
            <person name="Chronopoulou P."/>
            <person name="Avramopoulos D."/>
            <person name="Vassilopoulos D."/>
        </authorList>
    </citation>
    <scope>VARIANTS CMTX1 ILE-55; GLU-120 AND GLN-164</scope>
</reference>
<reference key="42">
    <citation type="journal article" date="1999" name="J. Neurol. Neurosurg. Psych.">
        <title>Central visual, acoustic, and motor pathway involvement in a Charcot-Marie-Tooth family with an Asn205Ser mutation in the connexin 32 gene.</title>
        <authorList>
            <person name="Baehr M."/>
            <person name="Andres F."/>
            <person name="Timmerman V."/>
            <person name="Nelis M.E."/>
            <person name="Van Broeckhoven C."/>
            <person name="Dichgans J."/>
        </authorList>
    </citation>
    <scope>VARIANT CMTX1 SER-205</scope>
</reference>
<reference key="43">
    <citation type="journal article" date="1999" name="J. Neurosci.">
        <title>Altered formation of hemichannels and gap junction channels caused by C-terminal connexin-32 mutations.</title>
        <authorList>
            <person name="Castro C."/>
            <person name="Gomez-Hernandez J.M."/>
            <person name="Silander K."/>
            <person name="Barrio L.C."/>
        </authorList>
    </citation>
    <scope>CHARACTERIZATION OF VARIANTS CMTX1 LYS-208; GLN-215; TRP-215; HIS-238 AND GLY-280</scope>
</reference>
<reference key="44">
    <citation type="journal article" date="2000" name="Clin. Genet.">
        <title>Mutational analysis and genotype/phenotype correlation in Turkish Charcot-Marie-Tooth type 1 and HNPP patients.</title>
        <authorList>
            <person name="Bissar-Tadmouri N."/>
            <person name="Parman Y."/>
            <person name="Boutrand L."/>
            <person name="Deymeer F."/>
            <person name="Serdaroglu P."/>
            <person name="Vandenberghe A."/>
            <person name="Battaloglu E."/>
        </authorList>
    </citation>
    <scope>VARIANTS CMTX1 MET-91 AND HIS-211</scope>
</reference>
<reference key="45">
    <citation type="journal article" date="2000" name="Eur. J. Paediatr. Neurol.">
        <title>A family with X-linked dominant Charcot-Marie-Tooth caused by a connexin32 mutation.</title>
        <authorList>
            <person name="Verhelst H.E."/>
            <person name="Lofgren A."/>
            <person name="Van Coster R.N."/>
        </authorList>
    </citation>
    <scope>VARIANT CMTX1 TYR-126</scope>
</reference>
<reference key="46">
    <citation type="journal article" date="2000" name="Eur. Neurol.">
        <title>Severe X-linked Charcot-Marie-Tooth neuropathy due to new mutations [G59R(G--&gt;C), W44X(G--&gt;A)] in the connexin 32 gene.</title>
        <authorList>
            <person name="Felice K.J."/>
            <person name="Seltzer W.K."/>
        </authorList>
    </citation>
    <scope>VARIANT CMTX1 ARG-59</scope>
</reference>
<reference key="47">
    <citation type="journal article" date="2000" name="Hum. Mutat.">
        <title>Screening for mutations in the peripheral myelin genes PMP22, MPZ and Cx32 (GJB1) in Russian Charcot-Marie-Tooth neuropathy patients.</title>
        <authorList>
            <person name="Mersiyanova I.V."/>
            <person name="Ismailov S.M."/>
            <person name="Polyakov A.V."/>
            <person name="Dadali E.L."/>
            <person name="Fedotov V.P."/>
            <person name="Nelis E."/>
            <person name="Loefgren A."/>
            <person name="Timmerman V."/>
            <person name="Van Broeckhoven C."/>
            <person name="Evgrafov O.V."/>
        </authorList>
    </citation>
    <scope>VARIANTS CMTX1 20-ILE-GLY-21 DELINS ASN-SER; LYS-34; ARG-80; VAL-90; VAL-93; TRP-107; TRP-142; GLN-164; HIS-183; LYS-186; LEU-193 AND LYS-208</scope>
</reference>
<reference key="48">
    <citation type="journal article" date="2000" name="Hum. Mutat.">
        <authorList>
            <person name="Mersiyanova I.V."/>
            <person name="Ismailov S.M."/>
            <person name="Polyakov A.V."/>
            <person name="Dadali E.L."/>
            <person name="Fedotov V.P."/>
            <person name="Nelis E."/>
            <person name="Loefgren A."/>
            <person name="Timmerman V."/>
            <person name="Van Broeckhoven C."/>
            <person name="Evgrafov O.V."/>
        </authorList>
    </citation>
    <scope>ERRATUM OF PUBMED:10737979</scope>
</reference>
<reference key="49">
    <citation type="journal article" date="2000" name="Hum. Mutat.">
        <title>Mutations in the peripheral myelin protein zero and connexin32 genes detected by non-isotopic RNase cleavage assay and their phenotypes in Japanese patients with Charcot-Marie-Tooth disease.</title>
        <authorList>
            <person name="Yoshihara T."/>
            <person name="Yamamoto M."/>
            <person name="Doyu M."/>
            <person name="Misu K."/>
            <person name="Hattori N."/>
            <person name="Hasegawa Y."/>
            <person name="Mokuno K."/>
            <person name="Mitsuma T."/>
            <person name="Sobue G."/>
        </authorList>
    </citation>
    <scope>VARIANTS CMTX1 LEU-69; GLN-142 AND GLN-164</scope>
</reference>
<reference key="50">
    <citation type="journal article" date="2000" name="Neurol. Sci.">
        <title>A new de novo mutation of the connexin-32 gene in a patient with X-linked Charcot-Marie-Tooth type 1 disease.</title>
        <authorList>
            <person name="Di Iorio G."/>
            <person name="Cappa V."/>
            <person name="Ciccodicola A."/>
            <person name="Sampaolo S."/>
            <person name="Ammendola A."/>
            <person name="Sanges G."/>
            <person name="Giugliano R."/>
            <person name="D'Urso M."/>
        </authorList>
    </citation>
    <scope>VARIANT CMTX1 ILE-8</scope>
</reference>
<reference key="51">
    <citation type="journal article" date="2001" name="Brain">
        <title>Clinical, electrophysiological and molecular genetic characteristics of 93 patients with X-linked Charcot-Marie-Tooth disease.</title>
        <authorList>
            <person name="Dubourg O."/>
            <person name="Tardieu S."/>
            <person name="Birouk N."/>
            <person name="Gouider R."/>
            <person name="Leger J.M."/>
            <person name="Maisonobe T."/>
            <person name="Brice A."/>
            <person name="Bouche P."/>
            <person name="LeGuern E."/>
        </authorList>
    </citation>
    <scope>VARIANTS CMTX1 GLY-22; THR-34; VAL-34; PHE-56; ILE-84; MET-91; ASP-94; GLN-94; MET-95; TRP-107; ILE-130; ARG-133; LEU-141; GLN-142; ALA-158; ASP-159; TRP-164; GLN-164; LYS-186; ARG-199; ASN-203; SER-205; 213-ILE-ILE-214 DELINS LEU AND TRP-215</scope>
    <scope>CHARACTERIZATION OF VARIANTS CMTX1 GLY-22; THR-34; PHE-56; GLN-94; MET-95; LYS-186 AND TRP-215</scope>
</reference>
<reference key="52">
    <citation type="journal article" date="2001" name="Hum. Mutat.">
        <title>A novel connexin 32 missense mutation (E208G) causing Charcot-Marie-Tooth disease.</title>
        <authorList>
            <person name="Kochanski A."/>
            <person name="Lofgren A."/>
            <person name="Jedrzejowska H."/>
            <person name="Ryniewicz B."/>
            <person name="Czarny-Ratajczak M."/>
            <person name="Barciszewska A.-M."/>
            <person name="Samocko J."/>
            <person name="Hausmanowa-Petrusewicz I."/>
            <person name="De Jonghe P."/>
            <person name="Timmerman V."/>
            <person name="Latos-Bielenska A."/>
        </authorList>
    </citation>
    <scope>VARIANT CMTX1 GLY-208</scope>
</reference>
<reference key="53">
    <citation type="journal article" date="2001" name="Hum. Mutat.">
        <title>Charcot-Marie-Tooth disease type I and related demyelinating neuropathies: mutation analysis in a large cohort of Italian families.</title>
        <authorList>
            <person name="Mostacciuolo M.L."/>
            <person name="Righetti E."/>
            <person name="Zortea M."/>
            <person name="Bosello V."/>
            <person name="Schiavon F."/>
            <person name="Vallo L."/>
            <person name="Merlini L."/>
            <person name="Siciliano G."/>
            <person name="Fabrizi G.M."/>
            <person name="Rizzuto N."/>
            <person name="Milani M."/>
            <person name="Baratta S."/>
            <person name="Taroni F."/>
        </authorList>
    </citation>
    <scope>VARIANTS CMTX1 CYS-7; PRO-8; GLN-22; PRO-25; ASN-30; CYS-59; MET-139; LEU-143 DEL; SER-151; TRP-164 AND LEU-184</scope>
</reference>
<reference key="54">
    <citation type="journal article" date="2001" name="Int. J. Mol. Med.">
        <title>Charcot-Marie-Tooth type X: a novel mutation in the Cx32 gene with central conduction slowing.</title>
        <authorList>
            <person name="Seeman P."/>
            <person name="Mazanec R."/>
            <person name="Ctvrteckova M."/>
            <person name="Smilkova D."/>
        </authorList>
    </citation>
    <scope>VARIANT CMTX1 HIS-65</scope>
</reference>
<reference key="55">
    <citation type="journal article" date="2001" name="J. Neurol.">
        <title>Mutation analysis in Chariot-Marie Tooth disease type 1: point mutations in the MPZ gene and the GJB1 gene cause comparable phenotypic heterogeneity.</title>
        <authorList>
            <person name="Young P."/>
            <person name="Grote K."/>
            <person name="Kuhlenbaeumer G."/>
            <person name="Debus O."/>
            <person name="Kurlemann H."/>
            <person name="Halfter H."/>
            <person name="Funke H."/>
            <person name="Ringelstein E.B."/>
            <person name="Stoegbauer F."/>
        </authorList>
    </citation>
    <scope>VARIANTS CMTX1 TRP-26; PHE-64; TRP-142; TRP-164 AND TRP-215</scope>
</reference>
<reference key="56">
    <citation type="journal article" date="2001" name="Neurology">
        <title>Episodes of generalized weakness in two sibs with the C164T mutation of the connexin 32 gene.</title>
        <authorList>
            <person name="Panas M."/>
            <person name="Kalfakis N."/>
            <person name="Karadimas C."/>
            <person name="Vassilopoulos D."/>
        </authorList>
    </citation>
    <scope>VARIANT CMTX1 ILE-55</scope>
</reference>
<reference key="57">
    <citation type="journal article" date="2002" name="Ann. Neurol.">
        <title>Charcot-Marie-Tooth disease and related neuropathies: mutation distribution and genotype-phenotype correlation.</title>
        <authorList>
            <person name="Boerkoel C.F."/>
            <person name="Takashima H."/>
            <person name="Garcia C.A."/>
            <person name="Olney R.K."/>
            <person name="Johnson J."/>
            <person name="Berry K."/>
            <person name="Russo P."/>
            <person name="Kennedy S."/>
            <person name="Teebi A.S."/>
            <person name="Scavina M."/>
            <person name="Williams L.L."/>
            <person name="Mancias P."/>
            <person name="Butler I.J."/>
            <person name="Krajewski K."/>
            <person name="Shy M."/>
            <person name="Lupski J.R."/>
        </authorList>
    </citation>
    <scope>VARIANTS CMTX1 TRP-15; GLN-22; GLY-102; PRO-108; ILE-205 AND TRP-215</scope>
</reference>
<reference key="58">
    <citation type="journal article" date="2002" name="Ann. Neurol.">
        <title>Transient central nervous system white matter abnormality in X-linked Charcot-Marie-Tooth disease.</title>
        <authorList>
            <person name="Paulson H.L."/>
            <person name="Garbern J.Y."/>
            <person name="Hoban T.F."/>
            <person name="Krajewski K.M."/>
            <person name="Lewis R.A."/>
            <person name="Fischbeck K.H."/>
            <person name="Grossman R.I."/>
            <person name="Lenkinski R."/>
            <person name="Kamholz J.A."/>
            <person name="Shy M.E."/>
        </authorList>
    </citation>
    <scope>VARIANTS CMTX1 TRP-142 AND TYR-168</scope>
</reference>
<reference key="59">
    <citation type="journal article" date="2002" name="Hum. Mutat.">
        <title>Molecular analysis in Japanese patients with Charcot-Marie-Tooth disease: DGGE analysis for PMP22, MPZ, and Cx32/GJB1 mutations.</title>
        <authorList>
            <person name="Numakura C."/>
            <person name="Lin C."/>
            <person name="Ikegami T."/>
            <person name="Guldberg P."/>
            <person name="Hayasaka K."/>
        </authorList>
    </citation>
    <scope>VARIANTS CMTX1 TRP-75; GLN-75; VAL-120 DEL; MET-139; LYS-146; ASP-147; VAL-209 DEL AND CYS-264</scope>
</reference>
<reference key="60">
    <citation type="journal article" date="2002" name="J. Neurol. Neurosurg. Psych.">
        <title>Six novel connexin32 (GJB1) mutations in X-linked Charcot-Marie-Tooth disease.</title>
        <authorList>
            <person name="Lee M.-J."/>
            <person name="Nelson I."/>
            <person name="Houlden H."/>
            <person name="Sweeney M.G."/>
            <person name="Hilton-Jones D."/>
            <person name="Blake J."/>
            <person name="Wood N.W."/>
            <person name="Reilly M.M."/>
        </authorList>
    </citation>
    <scope>VARIANTS CMTX1 CYS-24; ARG-55; ASP-125 AND SER-153</scope>
</reference>
<reference key="61">
    <citation type="journal article" date="2002" name="Neurobiol. Dis.">
        <title>Diverse trafficking abnormalities of connexin32 mutants causing CMTX.</title>
        <authorList>
            <person name="Yum S.W."/>
            <person name="Kleopa K.A."/>
            <person name="Shumas S."/>
            <person name="Scherer S.S."/>
        </authorList>
    </citation>
    <scope>CHARACTERIZATION OF VARIANTS CMTX ILE-34; LYS-34; THR-34; VAL-34; MET-35; MET-37; MET-38; VAL-40; GLN-75; PRO-75; TRP-75; ILE-205; VAL-213; CYS-219; HIS-219; GLY-220; CYS-230; LEU-230; HIS-238 AND ILE-239</scope>
</reference>
<reference key="62">
    <citation type="journal article" date="2002" name="Neurol. Sci.">
        <title>X-linked Charcot-Marie-Tooth disease caused by a novel point mutation in the connexin-32 gene.</title>
        <authorList>
            <person name="Ma W."/>
            <person name="Farrukh Nizam M."/>
            <person name="Grewal R.P."/>
        </authorList>
    </citation>
    <scope>VARIANT CMTX1 THR-40</scope>
</reference>
<reference key="63">
    <citation type="journal article" date="2002" name="Neuromuscul. Disord.">
        <title>Charcot-Marie-Tooth neuropathy: clinical phenotypes of four novel mutations in the MPZ and Cx 32 genes.</title>
        <authorList>
            <person name="Street V.A."/>
            <person name="Meekins G."/>
            <person name="Lipe H.P."/>
            <person name="Seltzer W.K."/>
            <person name="Carter G.T."/>
            <person name="Kraft G.H."/>
            <person name="Bird T.D."/>
        </authorList>
    </citation>
    <scope>VARIANT CMTX1 PRO-49</scope>
</reference>
<reference key="64">
    <citation type="journal article" date="2002" name="Proc. Natl. Acad. Sci. U.S.A.">
        <title>Voltage opens unopposed gap junction hemichannels formed by a connexin 32 mutant associated with X-linked Charcot-Marie-Tooth disease.</title>
        <authorList>
            <person name="Abrams C.K."/>
            <person name="Bennett M.V.L."/>
            <person name="Verselis V.K."/>
            <person name="Bargiello T.A."/>
        </authorList>
    </citation>
    <scope>CHARACTERIZATION OF VARIANT CMTX1 CYS-85</scope>
</reference>
<reference key="65">
    <citation type="journal article" date="2003" name="Arch. Neurol.">
        <title>Transient, recurrent, white matter lesions in X-linked Charcot-Marie-Tooth disease with novel connexin 32 mutation.</title>
        <authorList>
            <person name="Hanemann C.O."/>
            <person name="Bergmann C."/>
            <person name="Senderek J."/>
            <person name="Zerres K."/>
            <person name="Sperfeld A.-D."/>
        </authorList>
    </citation>
    <scope>VARIANT CMTX1 GLU-102 DEL</scope>
</reference>
<reference key="66">
    <citation type="journal article" date="2003" name="Brain">
        <title>Demyelinating and axonal features of Charcot-Marie-Tooth disease with mutations of myelin-related proteins (PMP22, MPZ and Cx32): a clinicopathological study of 205 Japanese patients.</title>
        <authorList>
            <consortium name="The study group for hereditary neuropathy in Japan"/>
            <person name="Hattori N."/>
            <person name="Yamamoto M."/>
            <person name="Yoshihara T."/>
            <person name="Koike H."/>
            <person name="Nakagawa M."/>
            <person name="Yoshikawa H."/>
            <person name="Ohnishi A."/>
            <person name="Hayasaka K."/>
            <person name="Onodera O."/>
            <person name="Baba M."/>
            <person name="Yasuda H."/>
            <person name="Saito T."/>
            <person name="Nakashima K."/>
            <person name="Kira J."/>
            <person name="Kaji R."/>
            <person name="Oka N."/>
            <person name="Sobue G."/>
        </authorList>
    </citation>
    <scope>VARIANTS CMTX1 LEU-26; ALA-55; HIS-57; ILE-63; LEU-69; MET-139; GLN-142; TRP-142; ARG-172; ALA-177; HIS-183; ALA-191 AND TYR-201</scope>
</reference>
<reference key="67">
    <citation type="journal article" date="2003" name="Hum. Mutat.">
        <title>Novel mutations in the Charcot-Marie-Tooth disease genes PMP22, MPZ, and GJB1.</title>
        <authorList>
            <person name="Huehne K."/>
            <person name="Benes V."/>
            <person name="Thiel C."/>
            <person name="Kraus C."/>
            <person name="Kress W."/>
            <person name="Hoeltzenbein M."/>
            <person name="Ploner C.J."/>
            <person name="Kotzian J."/>
            <person name="Reis A."/>
            <person name="Rott H.D."/>
            <person name="Rautenstrauss B.W."/>
        </authorList>
    </citation>
    <scope>VARIANTS CMTX1 7-TYR-THR-8 DELINS SER; ASN-138; GLN-164; ALA-172 AND SER-205</scope>
</reference>
<reference key="68">
    <citation type="journal article" date="2003" name="J. Neurosci.">
        <title>Pathogenesis of X-linked Charcot-Marie-Tooth disease: differential effects of two mutations in connexin 32.</title>
        <authorList>
            <person name="Abrams C.K."/>
            <person name="Freidin M."/>
            <person name="Bukauskas F."/>
            <person name="Dobrenis K."/>
            <person name="Bargiello T.A."/>
            <person name="Verselis V.K."/>
            <person name="Bennett M.V.L."/>
            <person name="Chen L."/>
            <person name="Sahenk Z."/>
        </authorList>
    </citation>
    <scope>VARIANTS CMTX1 GLY-102 AND ALA-181</scope>
    <scope>CHARACTERIZATION OF VARIANTS CMTX1 GLY-102 AND ALA-181</scope>
</reference>
<reference key="69">
    <citation type="journal article" date="2004" name="Hum. Mutat.">
        <title>Mutational analysis of PMP22, MPZ, GJB1, EGR2 and NEFL in Korean Charcot-Marie-Tooth neuropathy patients.</title>
        <authorList>
            <person name="Choi B.-O."/>
            <person name="Lee M.S."/>
            <person name="Shin S.H."/>
            <person name="Hwang J.H."/>
            <person name="Choi K.-G."/>
            <person name="Kim W.-K."/>
            <person name="Sunwoo I.N."/>
            <person name="Kim N.K."/>
            <person name="Chung K.W."/>
        </authorList>
    </citation>
    <scope>VARIANTS CMTX1 ALA-136; GLN-164 AND ARG-168</scope>
</reference>
<reference key="70">
    <citation type="journal article" date="2004" name="Hum. Mutat.">
        <authorList>
            <person name="Choi B.-O."/>
            <person name="Lee M.S."/>
            <person name="Shin S.H."/>
            <person name="Hwang J.H."/>
            <person name="Choi K.-G."/>
            <person name="Kim W.-K."/>
            <person name="Sunwoo I.N."/>
            <person name="Kim N.K."/>
            <person name="Chung K.W."/>
        </authorList>
    </citation>
    <scope>ERRATUM OF PUBMED:15241803</scope>
</reference>
<reference key="71">
    <citation type="journal article" date="2005" name="Ann. Neurol.">
        <title>Severe neuropathy with leaky connexin32 hemichannels.</title>
        <authorList>
            <person name="Liang G.S.L."/>
            <person name="de Miguel M."/>
            <person name="Gomez-Hernandez J.M."/>
            <person name="Glass J.D."/>
            <person name="Scherer S.S."/>
            <person name="Mintz M."/>
            <person name="Barrio L.C."/>
            <person name="Fischbeck K.H."/>
        </authorList>
    </citation>
    <scope>VARIANT CMTX1 CYS-235</scope>
    <scope>CHARACTERIZATION OF VARIANT CMTX1 CYS-235</scope>
</reference>
<reference key="72">
    <citation type="journal article" date="2005" name="Muscle Nerve">
        <title>X-linked Charcot-Marie-Tooth disease: phenotypic expression of a novel mutation Ile127Ser in the GJB1 (connexin 32) gene.</title>
        <authorList>
            <person name="Vondracek P."/>
            <person name="Seeman P."/>
            <person name="Hermanova M."/>
            <person name="Fajkusova L."/>
        </authorList>
    </citation>
    <scope>VARIANT CMTX1 SER-127</scope>
</reference>
<reference key="73">
    <citation type="journal article" date="2005" name="Neurogenetics">
        <title>Two missense mutations of EGR2 R359W and GJB1 V136A in a Charcot-Marie-Tooth disease family.</title>
        <authorList>
            <person name="Chung K.W."/>
            <person name="Sunwoo I.N."/>
            <person name="Kim S.M."/>
            <person name="Park K.D."/>
            <person name="Kim W.-K."/>
            <person name="Kim T.S."/>
            <person name="Koo H."/>
            <person name="Cho M."/>
            <person name="Lee J."/>
            <person name="Choi B.O."/>
        </authorList>
    </citation>
    <scope>VARIANT DSS ALA-136</scope>
</reference>
<reference key="74">
    <citation type="journal article" date="2017" name="Clin. Genet.">
        <title>Improved diagnostic yield of neuromuscular disorders applying clinical exome sequencing in patients arising from a consanguineous population.</title>
        <authorList>
            <person name="Fattahi Z."/>
            <person name="Kalhor Z."/>
            <person name="Fadaee M."/>
            <person name="Vazehan R."/>
            <person name="Parsimehr E."/>
            <person name="Abolhassani A."/>
            <person name="Beheshtian M."/>
            <person name="Zamani G."/>
            <person name="Nafissi S."/>
            <person name="Nilipour Y."/>
            <person name="Akbari M.R."/>
            <person name="Kahrizi K."/>
            <person name="Kariminejad A."/>
            <person name="Najmabadi H."/>
        </authorList>
    </citation>
    <scope>VARIANT CMTX1 GLU-124</scope>
</reference>
<protein>
    <recommendedName>
        <fullName>Gap junction beta-1 protein</fullName>
    </recommendedName>
    <alternativeName>
        <fullName>Connexin-32</fullName>
        <shortName>Cx32</shortName>
    </alternativeName>
    <alternativeName>
        <fullName>GAP junction 28 kDa liver protein</fullName>
    </alternativeName>
</protein>
<name>CXB1_HUMAN</name>